<feature type="chain" id="PRO_0000149158" description="Proliferating cell nuclear antigen">
    <location>
        <begin position="1"/>
        <end position="261"/>
    </location>
</feature>
<feature type="DNA-binding region" evidence="3">
    <location>
        <begin position="61"/>
        <end position="80"/>
    </location>
</feature>
<feature type="region of interest" description="Interaction with NUDT15" evidence="25">
    <location>
        <begin position="7"/>
        <end position="100"/>
    </location>
</feature>
<feature type="modified residue" description="N6-acetyllysine" evidence="25">
    <location>
        <position position="14"/>
    </location>
</feature>
<feature type="modified residue" description="N6-acetyllysine" evidence="77">
    <location>
        <position position="77"/>
    </location>
</feature>
<feature type="modified residue" description="N6-acetyllysine" evidence="77">
    <location>
        <position position="80"/>
    </location>
</feature>
<feature type="modified residue" description="Phosphotyrosine; by EGFR" evidence="16 66">
    <location>
        <position position="211"/>
    </location>
</feature>
<feature type="modified residue" description="N6-acetyllysine" evidence="77">
    <location>
        <position position="248"/>
    </location>
</feature>
<feature type="disulfide bond" evidence="12 55 59 64 72 74 75 76">
    <location>
        <begin position="135"/>
        <end position="162"/>
    </location>
</feature>
<feature type="cross-link" description="Glycyl lysine isopeptide (Lys-Gly) (interchain with G-Cter in SUMO2); alternate" evidence="78 79 80 81">
    <location>
        <position position="164"/>
    </location>
</feature>
<feature type="cross-link" description="Glycyl lysine isopeptide (Lys-Gly) (interchain with G-Cter in ubiquitin); alternate" evidence="15 17">
    <location>
        <position position="164"/>
    </location>
</feature>
<feature type="cross-link" description="Glycyl lysine isopeptide (Lys-Gly) (interchain with G-Cter in SUMO2)" evidence="81">
    <location>
        <position position="254"/>
    </location>
</feature>
<feature type="sequence variant" id="VAR_071871" description="In ATLD2; a hypomorphic mutation affecting DNA repair in response to UV; results in significantly decreased interaction with FEN1, LIG1 and ERCC5; dbSNP:rs369958038." evidence="49">
    <original>S</original>
    <variation>I</variation>
    <location>
        <position position="228"/>
    </location>
</feature>
<feature type="mutagenesis site" description="Inhibits acetylation, recruitment to DNA damage sites, inducible ubiquitination and protein degradation, DNA replication and repair synthesis efficiencies, but homotrimer formation, nuclear recruitment to DNA damage sites, interactions with CREBBP, EP300 and POLD1 are similar as the wild-type; in association with R-14; R-20; R-77 and R-80." evidence="50">
    <original>K</original>
    <variation>R</variation>
    <location>
        <position position="13"/>
    </location>
</feature>
<feature type="mutagenesis site" description="Inhibits acetylation, recruitment to DNA damage sites, inducible ubiquitination and protein degradation, DNA replication and repair synthesis efficiencies, but homotrimer formation, nuclear recruitment to DNA damage sites, interactions with CREBBP, EP300 and POLD1 are similar as the wild-type; in association with R-13; R-20; R-77 and R-80." evidence="50">
    <original>K</original>
    <variation>R</variation>
    <location>
        <position position="14"/>
    </location>
</feature>
<feature type="mutagenesis site" description="Inhibits acetylation, recruitment to DNA damage sites, inducible ubiquitination and protein degradation, DNA replication and repair synthesis efficiencies, but homotrimer formation, nuclear recruitment to DNA damage sites, interactions with CREBBP, EP300 and POLD1 are similar as the wild-type; in association with R-13; R-14; R-77 and R-80." evidence="50">
    <original>K</original>
    <variation>R</variation>
    <location>
        <position position="20"/>
    </location>
</feature>
<feature type="mutagenesis site" description="Complete loss of interaction with UHRF2." evidence="5">
    <original>M</original>
    <variation>A</variation>
    <location>
        <position position="40"/>
    </location>
</feature>
<feature type="mutagenesis site" description="No effect on POLD3-binding. Impairs binding to ALKBH2." evidence="5 53">
    <original>SHV</original>
    <variation>AAA</variation>
    <location>
        <begin position="43"/>
        <end position="45"/>
    </location>
</feature>
<feature type="mutagenesis site" description="Inhibits recruitment to DNA damage sites, but nuclear localization is similar as the wild-type; in association with A-80." evidence="50">
    <original>K</original>
    <variation>A</variation>
    <location>
        <position position="77"/>
    </location>
</feature>
<feature type="mutagenesis site" description="Inhibits acetylation, recruitment to DNA damage sites, inducible ubiquitination and protein degradation, DNA replication and repair synthesis efficiencies, but homotrimer formation, nuclear recruitment to DNA damage sites, interactions with CREBBP, EP300 and POLD1 are similar as the wild-type; in association with R-13; R-14; R-20 and R-80." evidence="50">
    <original>K</original>
    <variation>R</variation>
    <location>
        <position position="77"/>
    </location>
</feature>
<feature type="mutagenesis site" description="Inhibits recruitment to DNA damage sites, but nuclear localization is similar as the wild-type; in association with A-77." evidence="50">
    <original>K</original>
    <variation>A</variation>
    <location>
        <position position="80"/>
    </location>
</feature>
<feature type="mutagenesis site" description="Inhibits acetylation, recruitment to DNA damage sites, inducible ubiquitination and protein degradation, DNA replication and repair synthesis efficiencies, but homotrimer formation, nuclear recruitment to DNA damage sites, interactions with CREBBP, EP300 and POLD1 are similar as the wild-type; in association with R-13; R-14; R-20 and R-77." evidence="50">
    <original>K</original>
    <variation>R</variation>
    <location>
        <position position="80"/>
    </location>
</feature>
<feature type="mutagenesis site" description="Strong decrease in POLD3-binding. Impairs binding to ALKBH2." evidence="5 53">
    <original>QLGI</original>
    <variation>AAAA</variation>
    <location>
        <begin position="125"/>
        <end position="128"/>
    </location>
</feature>
<feature type="mutagenesis site" description="Complete loss of interaction with UHRF2." evidence="5">
    <original>I</original>
    <variation>A</variation>
    <location>
        <position position="128"/>
    </location>
</feature>
<feature type="mutagenesis site" description="Abolishes ubiquitination. No effect on interaction with SHPRH." evidence="15 17 21 28">
    <original>K</original>
    <variation>R</variation>
    <location>
        <position position="164"/>
    </location>
</feature>
<feature type="mutagenesis site" description="No effect on POLD3-binding. No effect on ALKBH2-binding." evidence="5 53">
    <original>VDK</original>
    <variation>AAA</variation>
    <location>
        <begin position="188"/>
        <end position="190"/>
    </location>
</feature>
<feature type="mutagenesis site" description="Alters chromatin-associated PCNA stability and its function in DNA replication and repair." evidence="16">
    <original>Y</original>
    <variation>F</variation>
    <location>
        <position position="211"/>
    </location>
</feature>
<feature type="mutagenesis site" description="Complete loss of interaction with UHRF2." evidence="5">
    <original>Y</original>
    <variation>A</variation>
    <location>
        <position position="250"/>
    </location>
</feature>
<feature type="mutagenesis site" description="Decrease in POLD3-binding." evidence="5">
    <original>LAPK</original>
    <variation>AAAA</variation>
    <location>
        <begin position="251"/>
        <end position="254"/>
    </location>
</feature>
<feature type="mutagenesis site" description="Complete loss of interaction with UHRF2." evidence="5">
    <original>A</original>
    <variation>G</variation>
    <location>
        <position position="252"/>
    </location>
</feature>
<feature type="strand" evidence="82">
    <location>
        <begin position="2"/>
        <end position="7"/>
    </location>
</feature>
<feature type="helix" evidence="82">
    <location>
        <begin position="10"/>
        <end position="20"/>
    </location>
</feature>
<feature type="strand" evidence="82">
    <location>
        <begin position="24"/>
        <end position="31"/>
    </location>
</feature>
<feature type="strand" evidence="82">
    <location>
        <begin position="34"/>
        <end position="40"/>
    </location>
</feature>
<feature type="strand" evidence="82">
    <location>
        <begin position="44"/>
        <end position="53"/>
    </location>
</feature>
<feature type="helix" evidence="82">
    <location>
        <begin position="54"/>
        <end position="56"/>
    </location>
</feature>
<feature type="strand" evidence="82">
    <location>
        <begin position="57"/>
        <end position="64"/>
    </location>
</feature>
<feature type="strand" evidence="82">
    <location>
        <begin position="66"/>
        <end position="71"/>
    </location>
</feature>
<feature type="helix" evidence="82">
    <location>
        <begin position="72"/>
        <end position="79"/>
    </location>
</feature>
<feature type="strand" evidence="87">
    <location>
        <begin position="84"/>
        <end position="86"/>
    </location>
</feature>
<feature type="strand" evidence="82">
    <location>
        <begin position="87"/>
        <end position="92"/>
    </location>
</feature>
<feature type="strand" evidence="83">
    <location>
        <begin position="94"/>
        <end position="96"/>
    </location>
</feature>
<feature type="strand" evidence="82">
    <location>
        <begin position="97"/>
        <end position="104"/>
    </location>
</feature>
<feature type="strand" evidence="85">
    <location>
        <begin position="106"/>
        <end position="108"/>
    </location>
</feature>
<feature type="strand" evidence="82">
    <location>
        <begin position="111"/>
        <end position="117"/>
    </location>
</feature>
<feature type="strand" evidence="84">
    <location>
        <begin position="121"/>
        <end position="126"/>
    </location>
</feature>
<feature type="strand" evidence="82">
    <location>
        <begin position="134"/>
        <end position="140"/>
    </location>
</feature>
<feature type="helix" evidence="82">
    <location>
        <begin position="141"/>
        <end position="152"/>
    </location>
</feature>
<feature type="strand" evidence="82">
    <location>
        <begin position="156"/>
        <end position="163"/>
    </location>
</feature>
<feature type="strand" evidence="82">
    <location>
        <begin position="166"/>
        <end position="173"/>
    </location>
</feature>
<feature type="strand" evidence="82">
    <location>
        <begin position="176"/>
        <end position="182"/>
    </location>
</feature>
<feature type="strand" evidence="86">
    <location>
        <begin position="187"/>
        <end position="189"/>
    </location>
</feature>
<feature type="helix" evidence="84">
    <location>
        <begin position="191"/>
        <end position="193"/>
    </location>
</feature>
<feature type="strand" evidence="82">
    <location>
        <begin position="196"/>
        <end position="201"/>
    </location>
</feature>
<feature type="strand" evidence="82">
    <location>
        <begin position="203"/>
        <end position="208"/>
    </location>
</feature>
<feature type="helix" evidence="82">
    <location>
        <begin position="209"/>
        <end position="215"/>
    </location>
</feature>
<feature type="helix" evidence="82">
    <location>
        <begin position="216"/>
        <end position="221"/>
    </location>
</feature>
<feature type="strand" evidence="82">
    <location>
        <begin position="223"/>
        <end position="229"/>
    </location>
</feature>
<feature type="strand" evidence="83">
    <location>
        <begin position="231"/>
        <end position="233"/>
    </location>
</feature>
<feature type="strand" evidence="82">
    <location>
        <begin position="235"/>
        <end position="241"/>
    </location>
</feature>
<feature type="turn" evidence="82">
    <location>
        <begin position="242"/>
        <end position="244"/>
    </location>
</feature>
<feature type="strand" evidence="82">
    <location>
        <begin position="245"/>
        <end position="251"/>
    </location>
</feature>
<feature type="strand" evidence="86">
    <location>
        <begin position="254"/>
        <end position="256"/>
    </location>
</feature>
<name>PCNA_HUMAN</name>
<evidence type="ECO:0000250" key="1">
    <source>
        <dbReference type="UniProtKB" id="P04961"/>
    </source>
</evidence>
<evidence type="ECO:0000250" key="2">
    <source>
        <dbReference type="UniProtKB" id="P17918"/>
    </source>
</evidence>
<evidence type="ECO:0000255" key="3"/>
<evidence type="ECO:0000269" key="4">
    <source>
    </source>
</evidence>
<evidence type="ECO:0000269" key="5">
    <source>
    </source>
</evidence>
<evidence type="ECO:0000269" key="6">
    <source>
    </source>
</evidence>
<evidence type="ECO:0000269" key="7">
    <source>
    </source>
</evidence>
<evidence type="ECO:0000269" key="8">
    <source>
    </source>
</evidence>
<evidence type="ECO:0000269" key="9">
    <source>
    </source>
</evidence>
<evidence type="ECO:0000269" key="10">
    <source>
    </source>
</evidence>
<evidence type="ECO:0000269" key="11">
    <source>
    </source>
</evidence>
<evidence type="ECO:0000269" key="12">
    <source>
    </source>
</evidence>
<evidence type="ECO:0000269" key="13">
    <source>
    </source>
</evidence>
<evidence type="ECO:0000269" key="14">
    <source>
    </source>
</evidence>
<evidence type="ECO:0000269" key="15">
    <source>
    </source>
</evidence>
<evidence type="ECO:0000269" key="16">
    <source>
    </source>
</evidence>
<evidence type="ECO:0000269" key="17">
    <source>
    </source>
</evidence>
<evidence type="ECO:0000269" key="18">
    <source>
    </source>
</evidence>
<evidence type="ECO:0000269" key="19">
    <source>
    </source>
</evidence>
<evidence type="ECO:0000269" key="20">
    <source>
    </source>
</evidence>
<evidence type="ECO:0000269" key="21">
    <source>
    </source>
</evidence>
<evidence type="ECO:0000269" key="22">
    <source>
    </source>
</evidence>
<evidence type="ECO:0000269" key="23">
    <source>
    </source>
</evidence>
<evidence type="ECO:0000269" key="24">
    <source>
    </source>
</evidence>
<evidence type="ECO:0000269" key="25">
    <source>
    </source>
</evidence>
<evidence type="ECO:0000269" key="26">
    <source>
    </source>
</evidence>
<evidence type="ECO:0000269" key="27">
    <source>
    </source>
</evidence>
<evidence type="ECO:0000269" key="28">
    <source>
    </source>
</evidence>
<evidence type="ECO:0000269" key="29">
    <source>
    </source>
</evidence>
<evidence type="ECO:0000269" key="30">
    <source>
    </source>
</evidence>
<evidence type="ECO:0000269" key="31">
    <source>
    </source>
</evidence>
<evidence type="ECO:0000269" key="32">
    <source>
    </source>
</evidence>
<evidence type="ECO:0000269" key="33">
    <source>
    </source>
</evidence>
<evidence type="ECO:0000269" key="34">
    <source>
    </source>
</evidence>
<evidence type="ECO:0000269" key="35">
    <source>
    </source>
</evidence>
<evidence type="ECO:0000269" key="36">
    <source>
    </source>
</evidence>
<evidence type="ECO:0000269" key="37">
    <source>
    </source>
</evidence>
<evidence type="ECO:0000269" key="38">
    <source>
    </source>
</evidence>
<evidence type="ECO:0000269" key="39">
    <source>
    </source>
</evidence>
<evidence type="ECO:0000269" key="40">
    <source>
    </source>
</evidence>
<evidence type="ECO:0000269" key="41">
    <source>
    </source>
</evidence>
<evidence type="ECO:0000269" key="42">
    <source>
    </source>
</evidence>
<evidence type="ECO:0000269" key="43">
    <source>
    </source>
</evidence>
<evidence type="ECO:0000269" key="44">
    <source>
    </source>
</evidence>
<evidence type="ECO:0000269" key="45">
    <source>
    </source>
</evidence>
<evidence type="ECO:0000269" key="46">
    <source>
    </source>
</evidence>
<evidence type="ECO:0000269" key="47">
    <source>
    </source>
</evidence>
<evidence type="ECO:0000269" key="48">
    <source>
    </source>
</evidence>
<evidence type="ECO:0000269" key="49">
    <source>
    </source>
</evidence>
<evidence type="ECO:0000269" key="50">
    <source>
    </source>
</evidence>
<evidence type="ECO:0000269" key="51">
    <source>
    </source>
</evidence>
<evidence type="ECO:0000269" key="52">
    <source>
    </source>
</evidence>
<evidence type="ECO:0000269" key="53">
    <source>
    </source>
</evidence>
<evidence type="ECO:0000269" key="54">
    <source>
    </source>
</evidence>
<evidence type="ECO:0000269" key="55">
    <source>
    </source>
</evidence>
<evidence type="ECO:0000269" key="56">
    <source>
    </source>
</evidence>
<evidence type="ECO:0000269" key="57">
    <source>
    </source>
</evidence>
<evidence type="ECO:0000269" key="58">
    <source>
    </source>
</evidence>
<evidence type="ECO:0000269" key="59">
    <source>
    </source>
</evidence>
<evidence type="ECO:0000269" key="60">
    <source>
    </source>
</evidence>
<evidence type="ECO:0000269" key="61">
    <source>
    </source>
</evidence>
<evidence type="ECO:0000269" key="62">
    <source>
    </source>
</evidence>
<evidence type="ECO:0000269" key="63">
    <source>
    </source>
</evidence>
<evidence type="ECO:0000269" key="64">
    <source>
    </source>
</evidence>
<evidence type="ECO:0000269" key="65">
    <source>
    </source>
</evidence>
<evidence type="ECO:0000269" key="66">
    <source>
    </source>
</evidence>
<evidence type="ECO:0000269" key="67">
    <source>
    </source>
</evidence>
<evidence type="ECO:0000269" key="68">
    <source>
    </source>
</evidence>
<evidence type="ECO:0000269" key="69">
    <source>
    </source>
</evidence>
<evidence type="ECO:0000305" key="70"/>
<evidence type="ECO:0007744" key="71">
    <source>
        <dbReference type="PDB" id="1AXC"/>
    </source>
</evidence>
<evidence type="ECO:0007744" key="72">
    <source>
        <dbReference type="PDB" id="1UL1"/>
    </source>
</evidence>
<evidence type="ECO:0007744" key="73">
    <source>
        <dbReference type="PDB" id="4ZTD"/>
    </source>
</evidence>
<evidence type="ECO:0007744" key="74">
    <source>
        <dbReference type="PDB" id="5IY4"/>
    </source>
</evidence>
<evidence type="ECO:0007744" key="75">
    <source>
        <dbReference type="PDB" id="5YCO"/>
    </source>
</evidence>
<evidence type="ECO:0007744" key="76">
    <source>
        <dbReference type="PDB" id="8COB"/>
    </source>
</evidence>
<evidence type="ECO:0007744" key="77">
    <source>
    </source>
</evidence>
<evidence type="ECO:0007744" key="78">
    <source>
    </source>
</evidence>
<evidence type="ECO:0007744" key="79">
    <source>
    </source>
</evidence>
<evidence type="ECO:0007744" key="80">
    <source>
    </source>
</evidence>
<evidence type="ECO:0007744" key="81">
    <source>
    </source>
</evidence>
<evidence type="ECO:0007829" key="82">
    <source>
        <dbReference type="PDB" id="1U7B"/>
    </source>
</evidence>
<evidence type="ECO:0007829" key="83">
    <source>
        <dbReference type="PDB" id="1VYM"/>
    </source>
</evidence>
<evidence type="ECO:0007829" key="84">
    <source>
        <dbReference type="PDB" id="5E0U"/>
    </source>
</evidence>
<evidence type="ECO:0007829" key="85">
    <source>
        <dbReference type="PDB" id="8F5Q"/>
    </source>
</evidence>
<evidence type="ECO:0007829" key="86">
    <source>
        <dbReference type="PDB" id="8UMY"/>
    </source>
</evidence>
<evidence type="ECO:0007829" key="87">
    <source>
        <dbReference type="PDB" id="8UN0"/>
    </source>
</evidence>
<comment type="function">
    <text evidence="21 26 48 50 62 66">Auxiliary protein of DNA polymerase delta and epsilon, is involved in the control of eukaryotic DNA replication by increasing the polymerase's processibility during elongation of the leading strand (PubMed:35585232). Induces a robust stimulatory effect on the 3'-5' exonuclease and 3'-phosphodiesterase, but not apurinic-apyrimidinic (AP) endonuclease, APEX2 activities. Has to be loaded onto DNA in order to be able to stimulate APEX2. Plays a key role in DNA damage response (DDR) by being conveniently positioned at the replication fork to coordinate DNA replication with DNA repair and DNA damage tolerance pathways (PubMed:24939902). Acts as a loading platform to recruit DDR proteins that allow completion of DNA replication after DNA damage and promote postreplication repair: Monoubiquitinated PCNA leads to recruitment of translesion (TLS) polymerases, while 'Lys-63'-linked polyubiquitination of PCNA is involved in error-free pathway and employs recombination mechanisms to synthesize across the lesion (PubMed:24695737).</text>
</comment>
<comment type="subunit">
    <text evidence="1 2 4 5 6 7 8 9 10 11 12 13 14 16 17 18 19 20 21 22 24 25 26 27 29 31 32 33 34 35 36 37 38 39 40 41 42 43 44 45 46 47 48 49 50 53 54 55 56 57 58 60 61 63 64 65 66 67 68 69">Homotrimer (PubMed:24939902). Interacts with p300/EP300; the interaction occurs on chromatin in UV-irradiated damaged cells (PubMed:24939902). Interacts with CREBBP (via transactivation domain and C-terminus); the interaction occurs on chromatin in UV-irradiated damaged cells (PubMed:24939902). Directly interacts with POLD1, POLD3 and POLD4 subunits of the DNA polymerase delta complex, POLD3 being the major interacting partner; the interaction with POLD3 is inhibited by CDKN1A/p21(CIP1) (PubMed:11595739, PubMed:16510448, PubMed:22148433, PubMed:24939902). Forms a complex with activator 1 heteropentamer in the presence of ATP. Interacts with EXO1, POLH, POLK, DNMT1, ERCC5, FEN1, CDC6 and POLDIP2 (PubMed:11784855, PubMed:12522211, PubMed:15149598, PubMed:15225546, PubMed:15616578, PubMed:24911150, PubMed:26760506, PubMed:9302295, PubMed:9305916, PubMed:9566895). Interacts with POLB (PubMed:19336415, PubMed:26760506). Interacts with APEX2; this interaction is triggered by reactive oxygen species and increased by misincorporation of uracil in nuclear DNA (PubMed:11376153, PubMed:19443450). Forms a ternary complex with DNTTIP2 and core histone (PubMed:12786946). Interacts with KCTD10 and PPP1R15A (By similarity). Interacts with SMARCA5/SNF2H (PubMed:15543136). Interacts with BAZ1B/WSTF; the interaction is direct and is required for BAZ1B/WSTF binding to replication foci during S phase (PubMed:15543136). Interacts with HLTF and SHPRH (PubMed:17130289, PubMed:18316726, PubMed:18719106). Interacts with NUDT15; this interaction is disrupted in response to UV irradiation and acetylation (PubMed:19419956). Interacts with CDKN1A/p21(CIP1) and CDT1; interacts via their PIP-box which also recruits the DCX(DTL) complex. The interaction with CDKN1A inhibits POLD3 binding (PubMed:11595739, PubMed:16949367, PubMed:18703516, PubMed:18794347). Interacts with DDX11 (PubMed:18499658). Interacts with EGFR; positively regulates PCNA (PubMed:17115032). Interacts with PARPBP (PubMed:22153967). Interacts (when ubiquitinated) with SPRTN; leading to enhance RAD18-mediated PCNA ubiquitination (PubMed:22681887, PubMed:27084448). Interacts (when polyubiquitinated) with ZRANB3 (PubMed:22704558, PubMed:22705370, PubMed:22759634). Interacts with SMARCAD1 (PubMed:21549307). Interacts with CDKN1C (PubMed:22634751). Interacts with PCLAF (via PIP-box) (PubMed:21628590, PubMed:23000965). Interacts with RTEL1 (via PIP-box); the interaction is direct and essential for the suppression of telomere fragility (PubMed:24115439). Interacts with FAM111A (via PIP-box); the interaction is direct and required for PCNA loading on chromatin binding (PubMed:24561620). Interacts with LIG1 (PubMed:24911150). Interacts with SETMAR (PubMed:20457750). Interacts with ANKRD17 (PubMed:23711367). Interacts with FBXO18/FBH1 (via PIP-box); the interaction recruits the DCX(DTL) complex and promotes ubiquitination and degradation of FBXO18/FBH1 (PubMed:23677613). Interacts with POLN (PubMed:19995904). Interacts with SDE2 (via PIP-box); the interaction is direct and prevents ultraviolet light induced monoubiquitination (PubMed:27906959). Component of the replisome complex composed of at least DONSON, MCM2, MCM7, PCNA and TICRR; interaction at least with PCNA occurs during DNA replication (PubMed:28191891). Interacts with MAPK15; the interaction is chromatin binding dependent and prevents MDM2-mediated PCNA destruction by inhibiting the association of PCNA with MDM2 (PubMed:20733054). Interacts with PARP10 (via PIP-box) (PubMed:24695737). Interacts with DDI2 (PubMed:29290612). Interacts with HMCES (via PIP-box) (PubMed:30554877). Interacts with TRAIP (via PIP-box) (PubMed:26711499, PubMed:27462463). Interacts with UHRF2 (PubMed:28951215). Interacts with ALKBH2; this interaction is enhanced during the S-phase of the cell cycle. Interacts with ATAD5; the interaction promotes USP1-mediated PCNA deubiquitination (PubMed:20147293). Interacts with DNA damage up-regulated protein DDUP (PubMed:35849344). Interacts (when phosphorylated) with GRB2 (PubMed:38459011). Interacts with ANG (PubMed:37218877). Interacts with nuclear UNG (isoform 2); this interaction mediates UNG recruitment to S-phase replication foci. Interacts with ERCC6L2 (via an atypical PIP-box); this interaction facilitates cenrtomeric localization of ERCC6L2 (PubMed:37014751).</text>
</comment>
<comment type="subunit">
    <text evidence="52">(Microbial infection) Interacts with herpes virus 8 protein LANA1.</text>
</comment>
<comment type="interaction">
    <interactant intactId="EBI-358311">
        <id>P12004</id>
    </interactant>
    <interactant intactId="EBI-709613">
        <id>P04075</id>
        <label>ALDOA</label>
    </interactant>
    <organismsDiffer>false</organismsDiffer>
    <experiments>3</experiments>
</comment>
<comment type="interaction">
    <interactant intactId="EBI-358311">
        <id>P12004</id>
    </interactant>
    <interactant intactId="EBI-525291">
        <id>P03950</id>
        <label>ANG</label>
    </interactant>
    <organismsDiffer>false</organismsDiffer>
    <experiments>4</experiments>
</comment>
<comment type="interaction">
    <interactant intactId="EBI-358311">
        <id>P12004</id>
    </interactant>
    <interactant intactId="EBI-352622">
        <id>P07355</id>
        <label>ANXA2</label>
    </interactant>
    <organismsDiffer>false</organismsDiffer>
    <experiments>2</experiments>
</comment>
<comment type="interaction">
    <interactant intactId="EBI-358311">
        <id>P12004</id>
    </interactant>
    <interactant intactId="EBI-714718">
        <id>P61769</id>
        <label>B2M</label>
    </interactant>
    <organismsDiffer>false</organismsDiffer>
    <experiments>3</experiments>
</comment>
<comment type="interaction">
    <interactant intactId="EBI-358311">
        <id>P12004</id>
    </interactant>
    <interactant intactId="EBI-375077">
        <id>P38936</id>
        <label>CDKN1A</label>
    </interactant>
    <organismsDiffer>false</organismsDiffer>
    <experiments>39</experiments>
</comment>
<comment type="interaction">
    <interactant intactId="EBI-358311">
        <id>P12004</id>
    </interactant>
    <interactant intactId="EBI-375053">
        <id>P42771</id>
        <label>CDKN2A</label>
    </interactant>
    <organismsDiffer>false</organismsDiffer>
    <experiments>8</experiments>
</comment>
<comment type="interaction">
    <interactant intactId="EBI-358311">
        <id>P12004</id>
    </interactant>
    <interactant intactId="EBI-456953">
        <id>Q9H211</id>
        <label>CDT1</label>
    </interactant>
    <organismsDiffer>false</organismsDiffer>
    <experiments>2</experiments>
</comment>
<comment type="interaction">
    <interactant intactId="EBI-358311">
        <id>P12004</id>
    </interactant>
    <interactant intactId="EBI-1020839">
        <id>Q13111</id>
        <label>CHAF1A</label>
    </interactant>
    <organismsDiffer>false</organismsDiffer>
    <experiments>4</experiments>
</comment>
<comment type="interaction">
    <interactant intactId="EBI-358311">
        <id>P12004</id>
    </interactant>
    <interactant intactId="EBI-11522780">
        <id>Q96DZ9-2</id>
        <label>CMTM5</label>
    </interactant>
    <organismsDiffer>false</organismsDiffer>
    <experiments>3</experiments>
</comment>
<comment type="interaction">
    <interactant intactId="EBI-358311">
        <id>P12004</id>
    </interactant>
    <interactant intactId="EBI-352162">
        <id>P68104</id>
        <label>EEF1A1</label>
    </interactant>
    <organismsDiffer>false</organismsDiffer>
    <experiments>2</experiments>
</comment>
<comment type="interaction">
    <interactant intactId="EBI-358311">
        <id>P12004</id>
    </interactant>
    <interactant intactId="EBI-353877">
        <id>P06733</id>
        <label>ENO1</label>
    </interactant>
    <organismsDiffer>false</organismsDiffer>
    <experiments>3</experiments>
</comment>
<comment type="interaction">
    <interactant intactId="EBI-358311">
        <id>P12004</id>
    </interactant>
    <interactant intactId="EBI-707816">
        <id>P39748</id>
        <label>FEN1</label>
    </interactant>
    <organismsDiffer>false</organismsDiffer>
    <experiments>22</experiments>
</comment>
<comment type="interaction">
    <interactant intactId="EBI-358311">
        <id>P12004</id>
    </interactant>
    <interactant intactId="EBI-448167">
        <id>P24522</id>
        <label>GADD45A</label>
    </interactant>
    <organismsDiffer>false</organismsDiffer>
    <experiments>3</experiments>
</comment>
<comment type="interaction">
    <interactant intactId="EBI-358311">
        <id>P12004</id>
    </interactant>
    <interactant intactId="EBI-354056">
        <id>P04406</id>
        <label>GAPDH</label>
    </interactant>
    <organismsDiffer>false</organismsDiffer>
    <experiments>3</experiments>
</comment>
<comment type="interaction">
    <interactant intactId="EBI-358311">
        <id>P12004</id>
    </interactant>
    <interactant intactId="EBI-1045161">
        <id>Q14527</id>
        <label>HLTF</label>
    </interactant>
    <organismsDiffer>false</organismsDiffer>
    <experiments>2</experiments>
</comment>
<comment type="interaction">
    <interactant intactId="EBI-358311">
        <id>P12004</id>
    </interactant>
    <interactant intactId="EBI-389787">
        <id>Q9H160</id>
        <label>ING2</label>
    </interactant>
    <organismsDiffer>false</organismsDiffer>
    <experiments>3</experiments>
</comment>
<comment type="interaction">
    <interactant intactId="EBI-358311">
        <id>P12004</id>
    </interactant>
    <interactant intactId="EBI-720354">
        <id>Q9H063</id>
        <label>MAF1</label>
    </interactant>
    <organismsDiffer>false</organismsDiffer>
    <experiments>4</experiments>
</comment>
<comment type="interaction">
    <interactant intactId="EBI-358311">
        <id>P12004</id>
    </interactant>
    <interactant intactId="EBI-1164205">
        <id>P20585</id>
        <label>MSH3</label>
    </interactant>
    <organismsDiffer>false</organismsDiffer>
    <experiments>6</experiments>
</comment>
<comment type="interaction">
    <interactant intactId="EBI-358311">
        <id>P12004</id>
    </interactant>
    <interactant intactId="EBI-14058375">
        <id>O95944</id>
        <label>NCR2</label>
    </interactant>
    <organismsDiffer>false</organismsDiffer>
    <experiments>7</experiments>
</comment>
<comment type="interaction">
    <interactant intactId="EBI-358311">
        <id>P12004</id>
    </interactant>
    <interactant intactId="EBI-591778">
        <id>P61970</id>
        <label>NUTF2</label>
    </interactant>
    <organismsDiffer>false</organismsDiffer>
    <experiments>3</experiments>
</comment>
<comment type="interaction">
    <interactant intactId="EBI-358311">
        <id>P12004</id>
    </interactant>
    <interactant intactId="EBI-10971436">
        <id>Q15004</id>
        <label>PCLAF</label>
    </interactant>
    <organismsDiffer>false</organismsDiffer>
    <experiments>7</experiments>
</comment>
<comment type="interaction">
    <interactant intactId="EBI-358311">
        <id>P12004</id>
    </interactant>
    <interactant intactId="EBI-358311">
        <id>P12004</id>
        <label>PCNA</label>
    </interactant>
    <organismsDiffer>false</organismsDiffer>
    <experiments>11</experiments>
</comment>
<comment type="interaction">
    <interactant intactId="EBI-358311">
        <id>P12004</id>
    </interactant>
    <interactant intactId="EBI-717905">
        <id>P18669</id>
        <label>PGAM1</label>
    </interactant>
    <organismsDiffer>false</organismsDiffer>
    <experiments>2</experiments>
</comment>
<comment type="interaction">
    <interactant intactId="EBI-358311">
        <id>P12004</id>
    </interactant>
    <interactant intactId="EBI-709599">
        <id>P00558</id>
        <label>PGK1</label>
    </interactant>
    <organismsDiffer>false</organismsDiffer>
    <experiments>2</experiments>
</comment>
<comment type="interaction">
    <interactant intactId="EBI-358311">
        <id>P12004</id>
    </interactant>
    <interactant intactId="EBI-716569">
        <id>P28340</id>
        <label>POLD1</label>
    </interactant>
    <organismsDiffer>false</organismsDiffer>
    <experiments>3</experiments>
</comment>
<comment type="interaction">
    <interactant intactId="EBI-358311">
        <id>P12004</id>
    </interactant>
    <interactant intactId="EBI-372354">
        <id>P49005</id>
        <label>POLD2</label>
    </interactant>
    <organismsDiffer>false</organismsDiffer>
    <experiments>3</experiments>
</comment>
<comment type="interaction">
    <interactant intactId="EBI-358311">
        <id>P12004</id>
    </interactant>
    <interactant intactId="EBI-864956">
        <id>Q15054</id>
        <label>POLD3</label>
    </interactant>
    <organismsDiffer>false</organismsDiffer>
    <experiments>8</experiments>
</comment>
<comment type="interaction">
    <interactant intactId="EBI-358311">
        <id>P12004</id>
    </interactant>
    <interactant intactId="EBI-864968">
        <id>Q9HCU8</id>
        <label>POLD4</label>
    </interactant>
    <organismsDiffer>false</organismsDiffer>
    <experiments>4</experiments>
</comment>
<comment type="interaction">
    <interactant intactId="EBI-358311">
        <id>P12004</id>
    </interactant>
    <interactant intactId="EBI-2255129">
        <id>P30041</id>
        <label>PRDX6</label>
    </interactant>
    <organismsDiffer>false</organismsDiffer>
    <experiments>2</experiments>
</comment>
<comment type="interaction">
    <interactant intactId="EBI-358311">
        <id>P12004</id>
    </interactant>
    <interactant intactId="EBI-398632">
        <id>Q9UBF6</id>
        <label>RNF7</label>
    </interactant>
    <organismsDiffer>false</organismsDiffer>
    <experiments>3</experiments>
</comment>
<comment type="interaction">
    <interactant intactId="EBI-358311">
        <id>P12004</id>
    </interactant>
    <interactant intactId="EBI-2908049">
        <id>Q86TU7</id>
        <label>SETD3</label>
    </interactant>
    <organismsDiffer>false</organismsDiffer>
    <experiments>3</experiments>
</comment>
<comment type="interaction">
    <interactant intactId="EBI-358311">
        <id>P12004</id>
    </interactant>
    <interactant intactId="EBI-10262251">
        <id>Q8IWU4</id>
        <label>SLC30A8</label>
    </interactant>
    <organismsDiffer>false</organismsDiffer>
    <experiments>3</experiments>
</comment>
<comment type="interaction">
    <interactant intactId="EBI-358311">
        <id>P12004</id>
    </interactant>
    <interactant intactId="EBI-742688">
        <id>Q9NZD8</id>
        <label>SPG21</label>
    </interactant>
    <organismsDiffer>false</organismsDiffer>
    <experiments>3</experiments>
</comment>
<comment type="interaction">
    <interactant intactId="EBI-358311">
        <id>P12004</id>
    </interactant>
    <interactant intactId="EBI-10173151">
        <id>A2RU14</id>
        <label>TMEM218</label>
    </interactant>
    <organismsDiffer>false</organismsDiffer>
    <experiments>4</experiments>
</comment>
<comment type="interaction">
    <interactant intactId="EBI-358311">
        <id>P12004</id>
    </interactant>
    <interactant intactId="EBI-717475">
        <id>P60174</id>
        <label>TPI1</label>
    </interactant>
    <organismsDiffer>false</organismsDiffer>
    <experiments>2</experiments>
</comment>
<comment type="interaction">
    <interactant intactId="EBI-358311">
        <id>P12004</id>
    </interactant>
    <interactant intactId="EBI-13954615">
        <id>Q5FWF4</id>
        <label>ZRANB3</label>
    </interactant>
    <organismsDiffer>false</organismsDiffer>
    <experiments>8</experiments>
</comment>
<comment type="interaction">
    <interactant intactId="EBI-358311">
        <id>P12004</id>
    </interactant>
    <interactant intactId="EBI-8874509">
        <id>Q8TE30</id>
    </interactant>
    <organismsDiffer>false</organismsDiffer>
    <experiments>6</experiments>
</comment>
<comment type="interaction">
    <interactant intactId="EBI-358311">
        <id>P12004</id>
    </interactant>
    <interactant intactId="EBI-1173616">
        <id>Q9Z111</id>
        <label>Gadd45g</label>
    </interactant>
    <organismsDiffer>true</organismsDiffer>
    <experiments>9</experiments>
</comment>
<comment type="interaction">
    <interactant intactId="EBI-358311">
        <id>P12004</id>
    </interactant>
    <interactant intactId="EBI-6050669">
        <id>Q1K9H5</id>
        <label>PB1</label>
    </interactant>
    <organismsDiffer>true</organismsDiffer>
    <experiments>2</experiments>
</comment>
<comment type="interaction">
    <interactant intactId="EBI-358311">
        <id>P12004</id>
    </interactant>
    <interactant intactId="EBI-6050648">
        <id>B4URF7</id>
        <label>PB2</label>
    </interactant>
    <organismsDiffer>true</organismsDiffer>
    <experiments>2</experiments>
</comment>
<comment type="subcellular location">
    <subcellularLocation>
        <location evidence="11 46 50 66">Nucleus</location>
    </subcellularLocation>
    <text evidence="11 50">Colocalizes with CREBBP, EP300 and POLD1 to sites of DNA damage (PubMed:24939902). Forms nuclear foci representing sites of ongoing DNA replication and vary in morphology and number during S phase (PubMed:15543136). Co-localizes with SMARCA5/SNF2H and BAZ1B/WSTF at replication foci during S phase (PubMed:15543136). Together with APEX2, is redistributed in discrete nuclear foci in presence of oxidative DNA damaging agents.</text>
</comment>
<comment type="PTM">
    <text evidence="16">Phosphorylated. Phosphorylation at Tyr-211 by EGFR stabilizes chromatin-associated PCNA.</text>
</comment>
<comment type="PTM">
    <text evidence="50">Acetylated by CREBBP and p300/EP300; preferentially acetylated by CREBBP on Lys-80, Lys-13 and Lys-14 and on Lys-77 by p300/EP300 upon loading on chromatin in response to UV irradiation (PubMed:19419956, PubMed:24939902). Lysine acetylation disrupts association with chromatin, hence promoting PCNA ubiquitination and proteasomal degradation in response to UV damage in a CREBBP- and EP300-dependent manner (PubMed:24939902). Acetylation disrupts interaction with NUDT15 and promotes degradation (PubMed:19419956).</text>
</comment>
<comment type="PTM">
    <text evidence="9 15 17 18 21 23 28 30 36 50">Ubiquitinated (PubMed:20227374, PubMed:24939902). Following DNA damage, can be either monoubiquitinated to stimulate direct bypass of DNA lesions by specialized DNA polymerases or polyubiquitinated to promote recombination-dependent DNA synthesis across DNA lesions by template switching mechanisms. Following induction of replication stress, monoubiquitinated by the UBE2B-RAD18 complex on Lys-164, leading to recruit translesion (TLS) polymerases, which are able to synthesize across DNA lesions in a potentially error-prone manner. An error-free pathway also exists and requires non-canonical polyubiquitination on Lys-164 through 'Lys-63' linkage of ubiquitin moieties by the E2 complex UBE2N-UBE2V2 and the E3 ligases, HLTF, RNF8 and SHPRH. This error-free pathway, also known as template switching, employs recombination mechanisms to synthesize across the lesion, using as a template the undamaged, newly synthesized strand of the sister chromatid. Monoubiquitination at Lys-164 also takes place in undamaged proliferating cells, and is mediated by the DCX(DTL) complex, leading to enhance PCNA-dependent translesion DNA synthesis. Sumoylated during S phase.</text>
</comment>
<comment type="PTM">
    <text evidence="51">Methylated on glutamate residues by ARMT1/C6orf211.</text>
</comment>
<comment type="disease" evidence="49">
    <disease id="DI-04180">
        <name>Ataxia-telangiectasia-like disorder 2</name>
        <acronym>ATLD2</acronym>
        <description>A neurodegenerative disorder due to defects in DNA excision repair. ATLD2 is characterized by developmental delay, ataxia, sensorineural hearing loss, short stature, cutaneous and ocular telangiectasia, and photosensitivity.</description>
        <dbReference type="MIM" id="615919"/>
    </disease>
    <text>The disease is caused by variants affecting the gene represented in this entry.</text>
</comment>
<comment type="miscellaneous">
    <text>Antibodies against PCNA are present in sera from patients with systemic lupus erythematosus.</text>
</comment>
<comment type="similarity">
    <text evidence="70">Belongs to the PCNA family.</text>
</comment>
<comment type="online information" name="Wikipedia">
    <link uri="https://en.wikipedia.org/wiki/PCNA"/>
    <text>PCNA entry</text>
</comment>
<comment type="online information" name="Atlas of Genetics and Cytogenetics in Oncology and Haematology">
    <link uri="https://atlasgeneticsoncology.org/gene/41670/PCNA"/>
</comment>
<reference key="1">
    <citation type="journal article" date="1987" name="Proc. Natl. Acad. Sci. U.S.A.">
        <title>Cloning and sequence of the human nuclear protein cyclin: homology with DNA-binding proteins.</title>
        <authorList>
            <person name="Almendral J.M."/>
            <person name="Huebsch D."/>
            <person name="Blundell P.A."/>
            <person name="Macdonald-Bravo H."/>
            <person name="Bravo R."/>
        </authorList>
    </citation>
    <scope>NUCLEOTIDE SEQUENCE [MRNA]</scope>
</reference>
<reference key="2">
    <citation type="journal article" date="1989" name="J. Biol. Chem.">
        <title>Structure of the human gene for the proliferating cell nuclear antigen.</title>
        <authorList>
            <person name="Travali S."/>
            <person name="Ku D.H."/>
            <person name="Rizzo M.G."/>
            <person name="Ottavio L."/>
            <person name="Baserga R."/>
            <person name="Calabretta B."/>
        </authorList>
    </citation>
    <scope>NUCLEOTIDE SEQUENCE [GENOMIC DNA]</scope>
</reference>
<reference key="3">
    <citation type="submission" date="2002-07" db="EMBL/GenBank/DDBJ databases">
        <authorList>
            <consortium name="NIEHS SNPs program"/>
        </authorList>
    </citation>
    <scope>NUCLEOTIDE SEQUENCE [GENOMIC DNA]</scope>
</reference>
<reference key="4">
    <citation type="journal article" date="2004" name="Nat. Genet.">
        <title>Complete sequencing and characterization of 21,243 full-length human cDNAs.</title>
        <authorList>
            <person name="Ota T."/>
            <person name="Suzuki Y."/>
            <person name="Nishikawa T."/>
            <person name="Otsuki T."/>
            <person name="Sugiyama T."/>
            <person name="Irie R."/>
            <person name="Wakamatsu A."/>
            <person name="Hayashi K."/>
            <person name="Sato H."/>
            <person name="Nagai K."/>
            <person name="Kimura K."/>
            <person name="Makita H."/>
            <person name="Sekine M."/>
            <person name="Obayashi M."/>
            <person name="Nishi T."/>
            <person name="Shibahara T."/>
            <person name="Tanaka T."/>
            <person name="Ishii S."/>
            <person name="Yamamoto J."/>
            <person name="Saito K."/>
            <person name="Kawai Y."/>
            <person name="Isono Y."/>
            <person name="Nakamura Y."/>
            <person name="Nagahari K."/>
            <person name="Murakami K."/>
            <person name="Yasuda T."/>
            <person name="Iwayanagi T."/>
            <person name="Wagatsuma M."/>
            <person name="Shiratori A."/>
            <person name="Sudo H."/>
            <person name="Hosoiri T."/>
            <person name="Kaku Y."/>
            <person name="Kodaira H."/>
            <person name="Kondo H."/>
            <person name="Sugawara M."/>
            <person name="Takahashi M."/>
            <person name="Kanda K."/>
            <person name="Yokoi T."/>
            <person name="Furuya T."/>
            <person name="Kikkawa E."/>
            <person name="Omura Y."/>
            <person name="Abe K."/>
            <person name="Kamihara K."/>
            <person name="Katsuta N."/>
            <person name="Sato K."/>
            <person name="Tanikawa M."/>
            <person name="Yamazaki M."/>
            <person name="Ninomiya K."/>
            <person name="Ishibashi T."/>
            <person name="Yamashita H."/>
            <person name="Murakawa K."/>
            <person name="Fujimori K."/>
            <person name="Tanai H."/>
            <person name="Kimata M."/>
            <person name="Watanabe M."/>
            <person name="Hiraoka S."/>
            <person name="Chiba Y."/>
            <person name="Ishida S."/>
            <person name="Ono Y."/>
            <person name="Takiguchi S."/>
            <person name="Watanabe S."/>
            <person name="Yosida M."/>
            <person name="Hotuta T."/>
            <person name="Kusano J."/>
            <person name="Kanehori K."/>
            <person name="Takahashi-Fujii A."/>
            <person name="Hara H."/>
            <person name="Tanase T.-O."/>
            <person name="Nomura Y."/>
            <person name="Togiya S."/>
            <person name="Komai F."/>
            <person name="Hara R."/>
            <person name="Takeuchi K."/>
            <person name="Arita M."/>
            <person name="Imose N."/>
            <person name="Musashino K."/>
            <person name="Yuuki H."/>
            <person name="Oshima A."/>
            <person name="Sasaki N."/>
            <person name="Aotsuka S."/>
            <person name="Yoshikawa Y."/>
            <person name="Matsunawa H."/>
            <person name="Ichihara T."/>
            <person name="Shiohata N."/>
            <person name="Sano S."/>
            <person name="Moriya S."/>
            <person name="Momiyama H."/>
            <person name="Satoh N."/>
            <person name="Takami S."/>
            <person name="Terashima Y."/>
            <person name="Suzuki O."/>
            <person name="Nakagawa S."/>
            <person name="Senoh A."/>
            <person name="Mizoguchi H."/>
            <person name="Goto Y."/>
            <person name="Shimizu F."/>
            <person name="Wakebe H."/>
            <person name="Hishigaki H."/>
            <person name="Watanabe T."/>
            <person name="Sugiyama A."/>
            <person name="Takemoto M."/>
            <person name="Kawakami B."/>
            <person name="Yamazaki M."/>
            <person name="Watanabe K."/>
            <person name="Kumagai A."/>
            <person name="Itakura S."/>
            <person name="Fukuzumi Y."/>
            <person name="Fujimori Y."/>
            <person name="Komiyama M."/>
            <person name="Tashiro H."/>
            <person name="Tanigami A."/>
            <person name="Fujiwara T."/>
            <person name="Ono T."/>
            <person name="Yamada K."/>
            <person name="Fujii Y."/>
            <person name="Ozaki K."/>
            <person name="Hirao M."/>
            <person name="Ohmori Y."/>
            <person name="Kawabata A."/>
            <person name="Hikiji T."/>
            <person name="Kobatake N."/>
            <person name="Inagaki H."/>
            <person name="Ikema Y."/>
            <person name="Okamoto S."/>
            <person name="Okitani R."/>
            <person name="Kawakami T."/>
            <person name="Noguchi S."/>
            <person name="Itoh T."/>
            <person name="Shigeta K."/>
            <person name="Senba T."/>
            <person name="Matsumura K."/>
            <person name="Nakajima Y."/>
            <person name="Mizuno T."/>
            <person name="Morinaga M."/>
            <person name="Sasaki M."/>
            <person name="Togashi T."/>
            <person name="Oyama M."/>
            <person name="Hata H."/>
            <person name="Watanabe M."/>
            <person name="Komatsu T."/>
            <person name="Mizushima-Sugano J."/>
            <person name="Satoh T."/>
            <person name="Shirai Y."/>
            <person name="Takahashi Y."/>
            <person name="Nakagawa K."/>
            <person name="Okumura K."/>
            <person name="Nagase T."/>
            <person name="Nomura N."/>
            <person name="Kikuchi H."/>
            <person name="Masuho Y."/>
            <person name="Yamashita R."/>
            <person name="Nakai K."/>
            <person name="Yada T."/>
            <person name="Nakamura Y."/>
            <person name="Ohara O."/>
            <person name="Isogai T."/>
            <person name="Sugano S."/>
        </authorList>
    </citation>
    <scope>NUCLEOTIDE SEQUENCE [LARGE SCALE MRNA]</scope>
    <source>
        <tissue>Skeletal muscle</tissue>
    </source>
</reference>
<reference key="5">
    <citation type="journal article" date="2001" name="Nature">
        <title>The DNA sequence and comparative analysis of human chromosome 20.</title>
        <authorList>
            <person name="Deloukas P."/>
            <person name="Matthews L.H."/>
            <person name="Ashurst J.L."/>
            <person name="Burton J."/>
            <person name="Gilbert J.G.R."/>
            <person name="Jones M."/>
            <person name="Stavrides G."/>
            <person name="Almeida J.P."/>
            <person name="Babbage A.K."/>
            <person name="Bagguley C.L."/>
            <person name="Bailey J."/>
            <person name="Barlow K.F."/>
            <person name="Bates K.N."/>
            <person name="Beard L.M."/>
            <person name="Beare D.M."/>
            <person name="Beasley O.P."/>
            <person name="Bird C.P."/>
            <person name="Blakey S.E."/>
            <person name="Bridgeman A.M."/>
            <person name="Brown A.J."/>
            <person name="Buck D."/>
            <person name="Burrill W.D."/>
            <person name="Butler A.P."/>
            <person name="Carder C."/>
            <person name="Carter N.P."/>
            <person name="Chapman J.C."/>
            <person name="Clamp M."/>
            <person name="Clark G."/>
            <person name="Clark L.N."/>
            <person name="Clark S.Y."/>
            <person name="Clee C.M."/>
            <person name="Clegg S."/>
            <person name="Cobley V.E."/>
            <person name="Collier R.E."/>
            <person name="Connor R.E."/>
            <person name="Corby N.R."/>
            <person name="Coulson A."/>
            <person name="Coville G.J."/>
            <person name="Deadman R."/>
            <person name="Dhami P.D."/>
            <person name="Dunn M."/>
            <person name="Ellington A.G."/>
            <person name="Frankland J.A."/>
            <person name="Fraser A."/>
            <person name="French L."/>
            <person name="Garner P."/>
            <person name="Grafham D.V."/>
            <person name="Griffiths C."/>
            <person name="Griffiths M.N.D."/>
            <person name="Gwilliam R."/>
            <person name="Hall R.E."/>
            <person name="Hammond S."/>
            <person name="Harley J.L."/>
            <person name="Heath P.D."/>
            <person name="Ho S."/>
            <person name="Holden J.L."/>
            <person name="Howden P.J."/>
            <person name="Huckle E."/>
            <person name="Hunt A.R."/>
            <person name="Hunt S.E."/>
            <person name="Jekosch K."/>
            <person name="Johnson C.M."/>
            <person name="Johnson D."/>
            <person name="Kay M.P."/>
            <person name="Kimberley A.M."/>
            <person name="King A."/>
            <person name="Knights A."/>
            <person name="Laird G.K."/>
            <person name="Lawlor S."/>
            <person name="Lehvaeslaiho M.H."/>
            <person name="Leversha M.A."/>
            <person name="Lloyd C."/>
            <person name="Lloyd D.M."/>
            <person name="Lovell J.D."/>
            <person name="Marsh V.L."/>
            <person name="Martin S.L."/>
            <person name="McConnachie L.J."/>
            <person name="McLay K."/>
            <person name="McMurray A.A."/>
            <person name="Milne S.A."/>
            <person name="Mistry D."/>
            <person name="Moore M.J.F."/>
            <person name="Mullikin J.C."/>
            <person name="Nickerson T."/>
            <person name="Oliver K."/>
            <person name="Parker A."/>
            <person name="Patel R."/>
            <person name="Pearce T.A.V."/>
            <person name="Peck A.I."/>
            <person name="Phillimore B.J.C.T."/>
            <person name="Prathalingam S.R."/>
            <person name="Plumb R.W."/>
            <person name="Ramsay H."/>
            <person name="Rice C.M."/>
            <person name="Ross M.T."/>
            <person name="Scott C.E."/>
            <person name="Sehra H.K."/>
            <person name="Shownkeen R."/>
            <person name="Sims S."/>
            <person name="Skuce C.D."/>
            <person name="Smith M.L."/>
            <person name="Soderlund C."/>
            <person name="Steward C.A."/>
            <person name="Sulston J.E."/>
            <person name="Swann R.M."/>
            <person name="Sycamore N."/>
            <person name="Taylor R."/>
            <person name="Tee L."/>
            <person name="Thomas D.W."/>
            <person name="Thorpe A."/>
            <person name="Tracey A."/>
            <person name="Tromans A.C."/>
            <person name="Vaudin M."/>
            <person name="Wall M."/>
            <person name="Wallis J.M."/>
            <person name="Whitehead S.L."/>
            <person name="Whittaker P."/>
            <person name="Willey D.L."/>
            <person name="Williams L."/>
            <person name="Williams S.A."/>
            <person name="Wilming L."/>
            <person name="Wray P.W."/>
            <person name="Hubbard T."/>
            <person name="Durbin R.M."/>
            <person name="Bentley D.R."/>
            <person name="Beck S."/>
            <person name="Rogers J."/>
        </authorList>
    </citation>
    <scope>NUCLEOTIDE SEQUENCE [LARGE SCALE GENOMIC DNA]</scope>
</reference>
<reference key="6">
    <citation type="submission" date="2005-09" db="EMBL/GenBank/DDBJ databases">
        <authorList>
            <person name="Mural R.J."/>
            <person name="Istrail S."/>
            <person name="Sutton G.G."/>
            <person name="Florea L."/>
            <person name="Halpern A.L."/>
            <person name="Mobarry C.M."/>
            <person name="Lippert R."/>
            <person name="Walenz B."/>
            <person name="Shatkay H."/>
            <person name="Dew I."/>
            <person name="Miller J.R."/>
            <person name="Flanigan M.J."/>
            <person name="Edwards N.J."/>
            <person name="Bolanos R."/>
            <person name="Fasulo D."/>
            <person name="Halldorsson B.V."/>
            <person name="Hannenhalli S."/>
            <person name="Turner R."/>
            <person name="Yooseph S."/>
            <person name="Lu F."/>
            <person name="Nusskern D.R."/>
            <person name="Shue B.C."/>
            <person name="Zheng X.H."/>
            <person name="Zhong F."/>
            <person name="Delcher A.L."/>
            <person name="Huson D.H."/>
            <person name="Kravitz S.A."/>
            <person name="Mouchard L."/>
            <person name="Reinert K."/>
            <person name="Remington K.A."/>
            <person name="Clark A.G."/>
            <person name="Waterman M.S."/>
            <person name="Eichler E.E."/>
            <person name="Adams M.D."/>
            <person name="Hunkapiller M.W."/>
            <person name="Myers E.W."/>
            <person name="Venter J.C."/>
        </authorList>
    </citation>
    <scope>NUCLEOTIDE SEQUENCE [LARGE SCALE GENOMIC DNA]</scope>
</reference>
<reference key="7">
    <citation type="journal article" date="2004" name="Genome Res.">
        <title>The status, quality, and expansion of the NIH full-length cDNA project: the Mammalian Gene Collection (MGC).</title>
        <authorList>
            <consortium name="The MGC Project Team"/>
        </authorList>
    </citation>
    <scope>NUCLEOTIDE SEQUENCE [LARGE SCALE MRNA]</scope>
    <source>
        <tissue>Bone marrow</tissue>
        <tissue>Lung</tissue>
    </source>
</reference>
<reference key="8">
    <citation type="journal article" date="1987" name="Nature">
        <title>The cell-cycle regulated proliferating cell nuclear antigen is required for SV40 DNA replication in vitro.</title>
        <authorList>
            <person name="Prelich G."/>
            <person name="Kostura M."/>
            <person name="Marshak D.R."/>
            <person name="Mathews M.B."/>
            <person name="Stillman B."/>
        </authorList>
    </citation>
    <scope>PROTEIN SEQUENCE OF 1-26</scope>
</reference>
<reference key="9">
    <citation type="submission" date="2008-12" db="UniProtKB">
        <authorList>
            <person name="Lubec G."/>
            <person name="Chen W.-Q."/>
            <person name="Sun Y."/>
        </authorList>
    </citation>
    <scope>PROTEIN SEQUENCE OF 169-181</scope>
    <scope>IDENTIFICATION BY MASS SPECTROMETRY</scope>
    <source>
        <tissue>Fetal brain cortex</tissue>
    </source>
</reference>
<reference key="10">
    <citation type="journal article" date="1997" name="J. Biol. Chem.">
        <title>The DNA repair endonuclease XPG binds to proliferating cell nuclear antigen (PCNA) and shares sequence elements with the PCNA-binding regions of FEN-1 and cyclin-dependent kinase inhibitor p21.</title>
        <authorList>
            <person name="Gary R."/>
            <person name="Ludwig D.L."/>
            <person name="Cornelius H.L."/>
            <person name="MacInnes M.A."/>
            <person name="Park M.S."/>
        </authorList>
    </citation>
    <scope>INTERACTION WITH ERCC5/XPG</scope>
</reference>
<reference key="11">
    <citation type="journal article" date="1997" name="Science">
        <title>Human DNA-(cytosine-5) methyltransferase-PCNA complex as a target for p21WAF1.</title>
        <authorList>
            <person name="Chuang L.S.-H."/>
            <person name="Ian H.-I."/>
            <person name="Koh T.-W."/>
            <person name="Ng H.-H."/>
            <person name="Xu G."/>
            <person name="Li B.F.L."/>
        </authorList>
    </citation>
    <scope>INTERACTION WITH DNMT1</scope>
</reference>
<reference key="12">
    <citation type="journal article" date="1998" name="Mol. Cell. Biol.">
        <title>Human CDC6/Cdc18 associates with Orc1 and cyclin-cdk and is selectively eliminated from the nucleus at the onset of S phase.</title>
        <authorList>
            <person name="Saha P."/>
            <person name="Chen J."/>
            <person name="Thome K.C."/>
            <person name="Lawlis S.J."/>
            <person name="Hou Z.H."/>
            <person name="Hendricks M."/>
            <person name="Parvin J.D."/>
            <person name="Dutta A."/>
        </authorList>
    </citation>
    <scope>INTERACTION WITH CDC6</scope>
</reference>
<reference key="13">
    <citation type="journal article" date="2001" name="J. Biol. Chem.">
        <title>Mediation of proliferating cell nuclear antigen (PCNA)-dependent DNA replication through a conserved p21(Cip1)-like PCNA-binding motif present in the third subunit of human DNA polymerase delta.</title>
        <authorList>
            <person name="Ducoux M."/>
            <person name="Urbach S."/>
            <person name="Baldacci G."/>
            <person name="Huebscher U."/>
            <person name="Koundrioukoff S."/>
            <person name="Christensen J."/>
            <person name="Hughes P."/>
        </authorList>
    </citation>
    <scope>INTERACTION WITH POLD3 AND CDKN1A</scope>
    <scope>MUTAGENESIS OF 43-SER--VAL-45; 125-GLN--ILE-128; 188-VAL--LYS-190 AND 251-LEU--LYS-254</scope>
</reference>
<reference key="14">
    <citation type="journal article" date="2001" name="Nucleic Acids Res.">
        <title>Human APE2 protein is mostly localized in the nuclei and to some extent in the mitochondria, while nuclear APE2 is partly associated with proliferating cell nuclear antigen.</title>
        <authorList>
            <person name="Tsuchimoto D."/>
            <person name="Sakai Y."/>
            <person name="Sakumi K."/>
            <person name="Nishioka K."/>
            <person name="Sasaki M."/>
            <person name="Fujiwara T."/>
            <person name="Nakabeppu Y."/>
        </authorList>
    </citation>
    <scope>INTERACTION WITH APEX2</scope>
</reference>
<reference key="15">
    <citation type="journal article" date="2002" name="Mol. Cell. Biol.">
        <title>Stimulation of DNA synthesis activity of human DNA polymerase kappa by PCNA.</title>
        <authorList>
            <person name="Haracska L."/>
            <person name="Unk I."/>
            <person name="Johnson R.E."/>
            <person name="Phillips B.B."/>
            <person name="Hurwitz J."/>
            <person name="Prakash L."/>
            <person name="Prakash S."/>
        </authorList>
    </citation>
    <scope>INTERACTION WITH POLK</scope>
</reference>
<reference key="16">
    <citation type="journal article" date="2003" name="Genes Cells">
        <title>Terminal deoxynucleotidyltransferase forms a ternary complex with a novel chromatin remodeling protein with 82 kDa and core histone.</title>
        <authorList>
            <person name="Fujita K."/>
            <person name="Shimazaki N."/>
            <person name="Ohta Y."/>
            <person name="Kubota T."/>
            <person name="Ibe S."/>
            <person name="Toji S."/>
            <person name="Tamai K."/>
            <person name="Fujisaki S."/>
            <person name="Hayano T."/>
            <person name="Koiwai O."/>
        </authorList>
    </citation>
    <scope>INTERACTION WITH DNTTIP2</scope>
</reference>
<reference key="17">
    <citation type="journal article" date="2003" name="J. Biol. Chem.">
        <title>Identification of a novel protein, PDIP38, that interacts with the p50 subunit of DNA polymerase delta and proliferating cell nuclear antigen.</title>
        <authorList>
            <person name="Liu L."/>
            <person name="Rodriguez-Belmonte E.M."/>
            <person name="Mazloum N."/>
            <person name="Xie B."/>
            <person name="Lee M.Y.W.T."/>
        </authorList>
    </citation>
    <scope>INTERACTION WITH POLDIP2</scope>
    <source>
        <tissue>Placenta</tissue>
    </source>
</reference>
<reference key="18">
    <citation type="journal article" date="2004" name="Mol. Cell">
        <title>A defined human system that supports bidirectional mismatch-provoked excision.</title>
        <authorList>
            <person name="Dzantiev L."/>
            <person name="Constantin N."/>
            <person name="Genschel J."/>
            <person name="Iyer R.R."/>
            <person name="Burgers P.M."/>
            <person name="Modrich P."/>
        </authorList>
    </citation>
    <scope>INTERACTION WITH EXO1</scope>
</reference>
<reference key="19">
    <citation type="journal article" date="2004" name="Mol. Cell">
        <title>Interaction of human DNA polymerase eta with monoubiquitinated PCNA: a possible mechanism for the polymerase switch in response to DNA damage.</title>
        <authorList>
            <person name="Kannouche P.L."/>
            <person name="Wing J."/>
            <person name="Lehmann A.R."/>
        </authorList>
    </citation>
    <scope>UBIQUITINATION</scope>
    <scope>INTERACTION WITH POLH</scope>
</reference>
<reference key="20">
    <citation type="journal article" date="2004" name="Nat. Cell Biol.">
        <title>The Williams syndrome transcription factor interacts with PCNA to target chromatin remodelling by ISWI to replication foci.</title>
        <authorList>
            <person name="Poot R.A."/>
            <person name="Bozhenok L."/>
            <person name="van den Berg D.L.C."/>
            <person name="Steffensen S."/>
            <person name="Ferreira F."/>
            <person name="Grimaldi M."/>
            <person name="Gilbert N."/>
            <person name="Ferreira J."/>
            <person name="Varga-Weisz P.D."/>
        </authorList>
    </citation>
    <scope>INTERACTION WITH BAZ1B AND SMARCA5</scope>
</reference>
<reference key="21">
    <citation type="journal article" date="2006" name="J. Biol. Chem.">
        <title>Functional roles of p12, the fourth subunit of human DNA polymerase delta.</title>
        <authorList>
            <person name="Li H."/>
            <person name="Xie B."/>
            <person name="Zhou Y."/>
            <person name="Rahmeh A."/>
            <person name="Trusa S."/>
            <person name="Zhang S."/>
            <person name="Gao Y."/>
            <person name="Lee E.Y."/>
            <person name="Lee M.Y."/>
        </authorList>
    </citation>
    <scope>INTERACTION WITH POLD1; POLD3 AND POLD4</scope>
</reference>
<reference key="22">
    <citation type="journal article" date="2006" name="J. Cell Biol.">
        <title>Human SHPRH suppresses genomic instability through proliferating cell nuclear antigen polyubiquitination.</title>
        <authorList>
            <person name="Motegi A."/>
            <person name="Sood R."/>
            <person name="Moinova H."/>
            <person name="Markowitz S.D."/>
            <person name="Liu P.P."/>
            <person name="Myung K."/>
        </authorList>
    </citation>
    <scope>INTERACTION WITH SHPRH</scope>
    <scope>UBIQUITINATION AT LYS-164</scope>
    <scope>MUTAGENESIS OF LYS-164</scope>
</reference>
<reference key="23">
    <citation type="journal article" date="2006" name="Mol. Cell">
        <title>A family of diverse Cul4-Ddb1-interacting proteins includes Cdt2, which is required for S phase destruction of the replication factor Cdt1.</title>
        <authorList>
            <person name="Jin J."/>
            <person name="Arias E.E."/>
            <person name="Chen J."/>
            <person name="Harper J.W."/>
            <person name="Walter J.C."/>
        </authorList>
    </citation>
    <scope>INTERACTION WITH CDT1</scope>
</reference>
<reference key="24">
    <citation type="journal article" date="2006" name="Nat. Cell Biol.">
        <title>Tyrosine phosphorylation controls PCNA function through protein stability.</title>
        <authorList>
            <person name="Wang S.C."/>
            <person name="Nakajima Y."/>
            <person name="Yu Y.L."/>
            <person name="Xia W."/>
            <person name="Chen C.T."/>
            <person name="Yang C.C."/>
            <person name="McIntush E.W."/>
            <person name="Li L.Y."/>
            <person name="Hawke D.H."/>
            <person name="Kobayashi R."/>
            <person name="Hung M.C."/>
        </authorList>
    </citation>
    <scope>PHOSPHORYLATION AT TYR-211 BY EGFR</scope>
    <scope>MUTAGENESIS OF TYR-211</scope>
    <scope>INTERACTION WITH EGFR</scope>
</reference>
<reference key="25">
    <citation type="journal article" date="2006" name="Proc. Natl. Acad. Sci. U.S.A.">
        <title>Human SHPRH is a ubiquitin ligase for Mms2-Ubc13-dependent polyubiquitylation of proliferating cell nuclear antigen.</title>
        <authorList>
            <person name="Unk I."/>
            <person name="Hajdu I."/>
            <person name="Fatyol K."/>
            <person name="Szakal B."/>
            <person name="Blastyak A."/>
            <person name="Bermudez V."/>
            <person name="Hurwitz J."/>
            <person name="Prakash L."/>
            <person name="Prakash S."/>
            <person name="Haracska L."/>
        </authorList>
    </citation>
    <scope>UBIQUITINATION AT LYS-164</scope>
    <scope>MUTAGENESIS OF LYS-164</scope>
</reference>
<reference key="26">
    <citation type="journal article" date="2008" name="Cell Cycle">
        <title>PCNA is ubiquitinated by RNF8.</title>
        <authorList>
            <person name="Zhang S."/>
            <person name="Chea J."/>
            <person name="Meng X."/>
            <person name="Zhou Y."/>
            <person name="Lee E.Y.C."/>
            <person name="Lee M.Y.W.T."/>
        </authorList>
    </citation>
    <scope>UBIQUITINATION</scope>
</reference>
<reference key="27">
    <citation type="journal article" date="2008" name="Genes Dev.">
        <title>PCNA-dependent regulation of p21 ubiquitylation and degradation via the CRL4Cdt2 ubiquitin ligase complex.</title>
        <authorList>
            <person name="Abbas T."/>
            <person name="Sivaprasad U."/>
            <person name="Terai K."/>
            <person name="Amador V."/>
            <person name="Pagano M."/>
            <person name="Dutta A."/>
        </authorList>
    </citation>
    <scope>INTERACTION WITH CDKN1A</scope>
</reference>
<reference key="28">
    <citation type="journal article" date="2009" name="Nucleic Acids Res.">
        <title>Human DNA polymerase beta polymorphism, Arg137Gln, impairs its polymerase activity and interaction with PCNA and the cellular base excision repair capacity.</title>
        <authorList>
            <person name="Guo Z."/>
            <person name="Zheng L."/>
            <person name="Dai H."/>
            <person name="Zhou M."/>
            <person name="Xu H."/>
            <person name="Shen B."/>
        </authorList>
    </citation>
    <scope>INTERACTION WITH POLB</scope>
</reference>
<reference key="29">
    <citation type="journal article" date="2008" name="J. Biol. Chem.">
        <title>Studies with the human cohesin establishment factor, ChlR1. Association of ChlR1 with Ctf18-RFC and Fen1.</title>
        <authorList>
            <person name="Farina A."/>
            <person name="Shin J.H."/>
            <person name="Kim D.H."/>
            <person name="Bermudez V.P."/>
            <person name="Kelman Z."/>
            <person name="Seo Y.S."/>
            <person name="Hurwitz J."/>
        </authorList>
    </citation>
    <scope>INTERACTION WITH DDX11</scope>
</reference>
<reference key="30">
    <citation type="journal article" date="2008" name="J. Biol. Chem.">
        <title>CDK inhibitor p21 is degraded by a proliferating cell nuclear antigen-coupled Cul4-DDB1Cdt2 pathway during S phase and after UV irradiation.</title>
        <authorList>
            <person name="Nishitani H."/>
            <person name="Shiomi Y."/>
            <person name="Iida H."/>
            <person name="Michishita M."/>
            <person name="Takami T."/>
            <person name="Tsurimoto T."/>
        </authorList>
    </citation>
    <scope>INTERACTION WITH CDKN1A</scope>
</reference>
<reference key="31">
    <citation type="journal article" date="2009" name="Nucleic Acids Res.">
        <title>Role of PCNA-dependent stimulation of 3'-phosphodiesterase and 3'-5' exonuclease activities of human Ape2 in repair of oxidative DNA damage.</title>
        <authorList>
            <person name="Burkovics P."/>
            <person name="Hajdu I."/>
            <person name="Szukacsov V."/>
            <person name="Unk I."/>
            <person name="Haracska L."/>
        </authorList>
    </citation>
    <scope>FUNCTION</scope>
    <scope>INTERACTION WITH APEX2</scope>
</reference>
<reference key="32">
    <citation type="journal article" date="2008" name="Proc. Natl. Acad. Sci. U.S.A.">
        <title>Human HLTF functions as a ubiquitin ligase for proliferating cell nuclear antigen polyubiquitination.</title>
        <authorList>
            <person name="Unk I."/>
            <person name="Hajdu I."/>
            <person name="Fatyol K."/>
            <person name="Hurwitz J."/>
            <person name="Yoon J.-H."/>
            <person name="Prakash L."/>
            <person name="Prakash S."/>
            <person name="Haracska L."/>
        </authorList>
    </citation>
    <scope>UBIQUITINATION</scope>
    <scope>INTERACTION WITH HLTF</scope>
</reference>
<reference key="33">
    <citation type="journal article" date="2008" name="Proc. Natl. Acad. Sci. U.S.A.">
        <title>Polyubiquitination of proliferating cell nuclear antigen by HLTF and SHPRH prevents genomic instability from stalled replication forks.</title>
        <authorList>
            <person name="Motegi A."/>
            <person name="Liaw H.-J."/>
            <person name="Lee K.-Y."/>
            <person name="Roest H.P."/>
            <person name="Maas A."/>
            <person name="Wu X."/>
            <person name="Moinova H."/>
            <person name="Markowitz S.D."/>
            <person name="Ding H."/>
            <person name="Hoeijmakers J.H.J."/>
            <person name="Myung K."/>
        </authorList>
    </citation>
    <scope>UBIQUITINATION</scope>
    <scope>FUNCTION</scope>
    <scope>INTERACTION WITH HLTF AND SHPRH</scope>
    <scope>MUTAGENESIS OF LYS-164</scope>
</reference>
<reference key="34">
    <citation type="journal article" date="2009" name="J. Biol. Chem.">
        <title>Proliferating cell nuclear antigen is protected from degradation by forming a complex with MutT Homolog2.</title>
        <authorList>
            <person name="Yu Y."/>
            <person name="Cai J.-P."/>
            <person name="Tu B."/>
            <person name="Wu L."/>
            <person name="Zhao Y."/>
            <person name="Liu X."/>
            <person name="Li L."/>
            <person name="McNutt M.A."/>
            <person name="Feng J."/>
            <person name="He Q."/>
            <person name="Yang Y."/>
            <person name="Wang H."/>
            <person name="Sekiguchi M."/>
            <person name="Zhu W.-G."/>
        </authorList>
    </citation>
    <scope>INTERACTION WITH NUDT15</scope>
    <scope>ACETYLATION AT LYS-14</scope>
</reference>
<reference key="35">
    <citation type="journal article" date="2009" name="Science">
        <title>Lysine acetylation targets protein complexes and co-regulates major cellular functions.</title>
        <authorList>
            <person name="Choudhary C."/>
            <person name="Kumar C."/>
            <person name="Gnad F."/>
            <person name="Nielsen M.L."/>
            <person name="Rehman M."/>
            <person name="Walther T.C."/>
            <person name="Olsen J.V."/>
            <person name="Mann M."/>
        </authorList>
    </citation>
    <scope>ACETYLATION [LARGE SCALE ANALYSIS] AT LYS-77; LYS-80 AND LYS-248</scope>
    <scope>IDENTIFICATION BY MASS SPECTROMETRY [LARGE SCALE ANALYSIS]</scope>
</reference>
<reference key="36">
    <citation type="journal article" date="2010" name="J. Biol. Chem.">
        <title>Human ELG1 regulates the level of ubiquitinated proliferating cell nuclear antigen (PCNA) through Its interactions with PCNA and USP1.</title>
        <authorList>
            <person name="Lee K.Y."/>
            <person name="Yang K."/>
            <person name="Cohn M.A."/>
            <person name="Sikdar N."/>
            <person name="D'Andrea A.D."/>
            <person name="Myung K."/>
        </authorList>
    </citation>
    <scope>INTERACTION WITH ATAD5</scope>
</reference>
<reference key="37">
    <citation type="journal article" date="2010" name="J. Cell Biol.">
        <title>A chromatin-bound kinase, ERK8, protects genomic integrity by inhibiting HDM2-mediated degradation of the DNA clamp PCNA.</title>
        <authorList>
            <person name="Groehler A.L."/>
            <person name="Lannigan D.A."/>
        </authorList>
    </citation>
    <scope>INTERACTION WITH MAPK15</scope>
</reference>
<reference key="38">
    <citation type="journal article" date="2010" name="Mol. Cell">
        <title>CRL4(Cdt2) E3 ubiquitin ligase monoubiquitinates PCNA to promote translesion DNA synthesis.</title>
        <authorList>
            <person name="Terai K."/>
            <person name="Abbas T."/>
            <person name="Jazaeri A.A."/>
            <person name="Dutta A."/>
        </authorList>
    </citation>
    <scope>UBIQUITINATION</scope>
    <scope>MUTAGENESIS OF LYS-164</scope>
</reference>
<reference key="39">
    <citation type="journal article" date="2010" name="Mol. Cell">
        <title>Three DNA polymerases, recruited by different mechanisms, carry out NER repair synthesis in human cells.</title>
        <authorList>
            <person name="Ogi T."/>
            <person name="Limsirichaikul S."/>
            <person name="Overmeer R.M."/>
            <person name="Volker M."/>
            <person name="Takenaka K."/>
            <person name="Cloney R."/>
            <person name="Nakazawa Y."/>
            <person name="Niimi A."/>
            <person name="Miki Y."/>
            <person name="Jaspers N.G."/>
            <person name="Mullenders L.H."/>
            <person name="Yamashita S."/>
            <person name="Fousteri M.I."/>
            <person name="Lehmann A.R."/>
        </authorList>
    </citation>
    <scope>UBIQUITINATION IN RESPONSE TO UV IRRADIATION</scope>
</reference>
<reference key="40">
    <citation type="journal article" date="2010" name="Mol. Cell. Biol.">
        <title>DNA polymerase POLN participates in cross-link repair and homologous recombination.</title>
        <authorList>
            <person name="Moldovan G.L."/>
            <person name="Madhavan M.V."/>
            <person name="Mirchandani K.D."/>
            <person name="McCaffrey R.M."/>
            <person name="Vinciguerra P."/>
            <person name="D'Andrea A.D."/>
        </authorList>
    </citation>
    <scope>INTERACTION WITH POLN</scope>
</reference>
<reference key="41">
    <citation type="journal article" date="2010" name="Nucleic Acids Res.">
        <title>Metnase promotes restart and repair of stalled and collapsed replication forks.</title>
        <authorList>
            <person name="De Haro L.P."/>
            <person name="Wray J."/>
            <person name="Williamson E.A."/>
            <person name="Durant S.T."/>
            <person name="Corwin L."/>
            <person name="Gentry A.C."/>
            <person name="Osheroff N."/>
            <person name="Lee S.H."/>
            <person name="Hromas R."/>
            <person name="Nickoloff J.A."/>
        </authorList>
    </citation>
    <scope>INTERACTION WITH SETMAR</scope>
</reference>
<reference key="42">
    <citation type="journal article" date="2011" name="BMC Syst. Biol.">
        <title>Initial characterization of the human central proteome.</title>
        <authorList>
            <person name="Burkard T.R."/>
            <person name="Planyavsky M."/>
            <person name="Kaupe I."/>
            <person name="Breitwieser F.P."/>
            <person name="Buerckstuemmer T."/>
            <person name="Bennett K.L."/>
            <person name="Superti-Furga G."/>
            <person name="Colinge J."/>
        </authorList>
    </citation>
    <scope>IDENTIFICATION BY MASS SPECTROMETRY [LARGE SCALE ANALYSIS]</scope>
</reference>
<reference key="43">
    <citation type="journal article" date="2011" name="Mol. Cell">
        <title>Maintenance of silent chromatin through replication requires SWI/SNF-like chromatin remodeler SMARCAD1.</title>
        <authorList>
            <person name="Rowbotham S.P."/>
            <person name="Barki L."/>
            <person name="Neves-Costa A."/>
            <person name="Santos F."/>
            <person name="Dean W."/>
            <person name="Hawkes N."/>
            <person name="Choudhary P."/>
            <person name="Will W.R."/>
            <person name="Webster J."/>
            <person name="Oxley D."/>
            <person name="Green C.M."/>
            <person name="Varga-Weisz P."/>
            <person name="Mermoud J.E."/>
        </authorList>
    </citation>
    <scope>INTERACTION WITH SMARCAD1</scope>
</reference>
<reference key="44">
    <citation type="journal article" date="2011" name="Proc. Natl. Acad. Sci. U.S.A.">
        <title>Proliferating cell nuclear antigen (PCNA)-associated KIAA0101/PAF15 protein is a cell cycle-regulated anaphase-promoting complex/cyclosome substrate.</title>
        <authorList>
            <person name="Emanuele M.J."/>
            <person name="Ciccia A."/>
            <person name="Elia A.E."/>
            <person name="Elledge S.J."/>
        </authorList>
    </citation>
    <scope>INTERACTION WITH PCLAF</scope>
</reference>
<reference key="45">
    <citation type="journal article" date="2012" name="Biochemistry">
        <title>Phosphorylation of the p68 subunit of Pol delta acts as a molecular switch to regulate its interaction with PCNA.</title>
        <authorList>
            <person name="Rahmeh A.A."/>
            <person name="Zhou Y."/>
            <person name="Xie B."/>
            <person name="Li H."/>
            <person name="Lee E.Y."/>
            <person name="Lee M.Y."/>
        </authorList>
    </citation>
    <scope>INTERACTION WITH POLD3</scope>
</reference>
<reference key="46">
    <citation type="journal article" date="2012" name="DNA Repair">
        <title>The UNG2 Arg88Cys variant abrogates RPA-mediated recruitment of UNG2 to single-stranded DNA.</title>
        <authorList>
            <person name="Torseth K."/>
            <person name="Doseth B."/>
            <person name="Hagen L."/>
            <person name="Olaisen C."/>
            <person name="Liabakk N.B."/>
            <person name="Graesmann H."/>
            <person name="Durandy A."/>
            <person name="Otterlei M."/>
            <person name="Krokan H.E."/>
            <person name="Kavli B."/>
            <person name="Slupphaug G."/>
        </authorList>
    </citation>
    <scope>INTERACTION WITH UNG</scope>
</reference>
<reference key="47">
    <citation type="journal article" date="2012" name="Mol. Cell">
        <title>Inhibition of homologous recombination by the PCNA-interacting protein PARI.</title>
        <authorList>
            <person name="Moldovan G.L."/>
            <person name="Dejsuphong D."/>
            <person name="Petalcorin M.I."/>
            <person name="Hofmann K."/>
            <person name="Takeda S."/>
            <person name="Boulton S.J."/>
            <person name="D'Andrea A.D."/>
        </authorList>
    </citation>
    <scope>INTERACTION WITH PARPBP</scope>
    <scope>SUMOYLATION</scope>
</reference>
<reference key="48">
    <citation type="journal article" date="2012" name="Mol. Cell">
        <title>Spartan/C1orf124, a reader of PCNA ubiquitylation and a regulator of UV-induced DNA damage response.</title>
        <authorList>
            <person name="Centore R.C."/>
            <person name="Yazinski S.A."/>
            <person name="Tse A."/>
            <person name="Zou L."/>
        </authorList>
    </citation>
    <scope>INTERACTION WITH SPRTN</scope>
</reference>
<reference key="49">
    <citation type="journal article" date="2012" name="Genes Dev.">
        <title>ZRANB3 is a structure-specific ATP-dependent endonuclease involved in replication stress response.</title>
        <authorList>
            <person name="Weston R."/>
            <person name="Peeters H."/>
            <person name="Ahel D."/>
        </authorList>
    </citation>
    <scope>INTERACTION WITH ZRANB3</scope>
</reference>
<reference key="50">
    <citation type="journal article" date="2012" name="Mol. Cell">
        <title>The HARP-like domain-containing protein AH2/ZRANB3 binds to PCNA and participates in cellular response to replication stress.</title>
        <authorList>
            <person name="Yuan J."/>
            <person name="Ghosal G."/>
            <person name="Chen J."/>
        </authorList>
    </citation>
    <scope>INTERACTION WITH ZRANB3</scope>
</reference>
<reference key="51">
    <citation type="journal article" date="2012" name="Nat. Cell Biol.">
        <title>Systems-wide analysis of ubiquitylation dynamics reveals a key role for PAF15 ubiquitylation in DNA-damage bypass.</title>
        <authorList>
            <person name="Povlsen L.K."/>
            <person name="Beli P."/>
            <person name="Wagner S.A."/>
            <person name="Poulsen S.L."/>
            <person name="Sylvestersen K.B."/>
            <person name="Poulsen J.W."/>
            <person name="Nielsen M.L."/>
            <person name="Bekker-Jensen S."/>
            <person name="Mailand N."/>
            <person name="Choudhary C."/>
        </authorList>
    </citation>
    <scope>INTERACTION WITH PCLAF</scope>
</reference>
<reference key="52">
    <citation type="journal article" date="2012" name="Mol. Cell">
        <title>Polyubiquitinated PCNA recruits the ZRANB3 translocase to maintain genomic integrity after replication stress.</title>
        <authorList>
            <person name="Ciccia A."/>
            <person name="Nimonkar A.V."/>
            <person name="Hu Y."/>
            <person name="Hajdu I."/>
            <person name="Achar Y.J."/>
            <person name="Izhar L."/>
            <person name="Petit S.A."/>
            <person name="Adamson B."/>
            <person name="Yoon J.C."/>
            <person name="Kowalczykowski S.C."/>
            <person name="Livingston D.M."/>
            <person name="Haracska L."/>
            <person name="Elledge S.J."/>
        </authorList>
    </citation>
    <scope>INTERACTION WITH ZRANB3</scope>
</reference>
<reference key="53">
    <citation type="journal article" date="2012" name="Nat. Genet.">
        <title>Mutations in the PCNA-binding domain of CDKN1C cause IMAGe syndrome.</title>
        <authorList>
            <person name="Arboleda V.A."/>
            <person name="Lee H."/>
            <person name="Parnaik R."/>
            <person name="Fleming A."/>
            <person name="Banerjee A."/>
            <person name="Ferraz-de-Souza B."/>
            <person name="Delot E.C."/>
            <person name="Rodriguez-Fernandez I.A."/>
            <person name="Braslavsky D."/>
            <person name="Bergada I."/>
            <person name="Dell'Angelica E.C."/>
            <person name="Nelson S.F."/>
            <person name="Martinez-Agosto J.A."/>
            <person name="Achermann J.C."/>
            <person name="Vilain E."/>
        </authorList>
    </citation>
    <scope>INTERACTION WITH CDKN1C</scope>
</reference>
<reference key="54">
    <citation type="journal article" date="2013" name="FEBS Lett.">
        <title>A role for the Ankyrin repeat containing protein Ankrd17 in Nod1- and Nod2-mediated inflammatory responses.</title>
        <authorList>
            <person name="Menning M."/>
            <person name="Kufer T.A."/>
        </authorList>
    </citation>
    <scope>INTERACTION WITH ANKRD17</scope>
</reference>
<reference key="55">
    <citation type="journal article" date="2013" name="Nucleic Acids Res.">
        <title>The helicase FBH1 is tightly regulated by PCNA via CRL4(Cdt2)-mediated proteolysis in human cells.</title>
        <authorList>
            <person name="Bacquin A."/>
            <person name="Pouvelle C."/>
            <person name="Siaud N."/>
            <person name="Perderiset M."/>
            <person name="Salome-Desnoulez S."/>
            <person name="Tellier-Lebegue C."/>
            <person name="Lopez B."/>
            <person name="Charbonnier J.B."/>
            <person name="Kannouche P.L."/>
        </authorList>
    </citation>
    <scope>INTERACTION WITH FBH1</scope>
</reference>
<reference key="56">
    <citation type="journal article" date="2013" name="Science">
        <title>RTEL1 is a replisome-associated helicase that promotes telomere and genome-wide replication.</title>
        <authorList>
            <person name="Vannier J.B."/>
            <person name="Sandhu S."/>
            <person name="Petalcorin M.I."/>
            <person name="Wu X."/>
            <person name="Nabi Z."/>
            <person name="Ding H."/>
            <person name="Boulton S.J."/>
        </authorList>
    </citation>
    <scope>INTERACTION WITH RTEL1</scope>
    <scope>SUBCELLULAR LOCATION</scope>
</reference>
<reference key="57">
    <citation type="journal article" date="2014" name="J. Biol. Chem.">
        <title>The ADP-ribosyltransferase PARP10/ARTD10 interacts with proliferating cell nuclear antigen (PCNA) and is required for DNA damage tolerance.</title>
        <authorList>
            <person name="Nicolae C.M."/>
            <person name="Aho E.R."/>
            <person name="Vlahos A.H."/>
            <person name="Choe K.N."/>
            <person name="De S."/>
            <person name="Karras G.I."/>
            <person name="Moldovan G.L."/>
        </authorList>
    </citation>
    <scope>FUNCTION</scope>
    <scope>INTERACTION WITH PARP10</scope>
</reference>
<reference key="58">
    <citation type="journal article" date="2014" name="J. Clin. Invest.">
        <title>Hypomorphic PCNA mutation underlies a human DNA repair disorder.</title>
        <authorList>
            <person name="Baple E.L."/>
            <person name="Chambers H."/>
            <person name="Cross H.E."/>
            <person name="Fawcett H."/>
            <person name="Nakazawa Y."/>
            <person name="Chioza B.A."/>
            <person name="Harlalka G.V."/>
            <person name="Mansour S."/>
            <person name="Sreekantan-Nair A."/>
            <person name="Patton M.A."/>
            <person name="Muggenthaler M."/>
            <person name="Rich P."/>
            <person name="Wagner K."/>
            <person name="Coblentz R."/>
            <person name="Stein C.K."/>
            <person name="Last J.I."/>
            <person name="Taylor A.M."/>
            <person name="Jackson A.P."/>
            <person name="Ogi T."/>
            <person name="Lehmann A.R."/>
            <person name="Green C.M."/>
            <person name="Crosby A.H."/>
        </authorList>
    </citation>
    <scope>INVOLVEMENT IN ATLD2</scope>
    <scope>INTERACTION WITH FEN1; LIG1 AND ERCC5</scope>
    <scope>VARIANT ATLD2 ILE-228</scope>
    <scope>CHARACTERIZATION OF VARIANT ATDL2 ILE-228</scope>
</reference>
<reference key="59">
    <citation type="journal article" date="2014" name="J. Proteomics">
        <title>An enzyme assisted RP-RPLC approach for in-depth analysis of human liver phosphoproteome.</title>
        <authorList>
            <person name="Bian Y."/>
            <person name="Song C."/>
            <person name="Cheng K."/>
            <person name="Dong M."/>
            <person name="Wang F."/>
            <person name="Huang J."/>
            <person name="Sun D."/>
            <person name="Wang L."/>
            <person name="Ye M."/>
            <person name="Zou H."/>
        </authorList>
    </citation>
    <scope>IDENTIFICATION BY MASS SPECTROMETRY [LARGE SCALE ANALYSIS]</scope>
    <source>
        <tissue>Liver</tissue>
    </source>
</reference>
<reference key="60">
    <citation type="journal article" date="2014" name="Nat. Cell Biol.">
        <title>Nascent chromatin capture proteomics determines chromatin dynamics during DNA replication and identifies unknown fork components.</title>
        <authorList>
            <person name="Alabert C."/>
            <person name="Bukowski-Wills J.C."/>
            <person name="Lee S.B."/>
            <person name="Kustatscher G."/>
            <person name="Nakamura K."/>
            <person name="de Lima Alves F."/>
            <person name="Menard P."/>
            <person name="Mejlvang J."/>
            <person name="Rappsilber J."/>
            <person name="Groth A."/>
        </authorList>
    </citation>
    <scope>INTERACTION WITH FAM111A</scope>
</reference>
<reference key="61">
    <citation type="journal article" date="2014" name="Nucleic Acids Res.">
        <title>CBP and p300 acetylate PCNA to link its degradation with nucleotide excision repair synthesis.</title>
        <authorList>
            <person name="Cazzalini O."/>
            <person name="Sommatis S."/>
            <person name="Tillhon M."/>
            <person name="Dutto I."/>
            <person name="Bachi A."/>
            <person name="Rapp A."/>
            <person name="Nardo T."/>
            <person name="Scovassi A.I."/>
            <person name="Necchi D."/>
            <person name="Cardoso M.C."/>
            <person name="Stivala L.A."/>
            <person name="Prosperi E."/>
        </authorList>
    </citation>
    <scope>FUNCTION</scope>
    <scope>TRIMERIZATION</scope>
    <scope>INTERACTION WITH CREBBP; EP300 AND POLD1</scope>
    <scope>ACETYLATION</scope>
    <scope>UBIQUITINATION</scope>
    <scope>ASSOCIATION WITH CHROMATIN</scope>
    <scope>MUTAGENESIS OF LYS-13; LYS-14; LYS-20; LYS-77 AND LYS-80</scope>
</reference>
<reference key="62">
    <citation type="journal article" date="2014" name="Proc. Natl. Acad. Sci. U.S.A.">
        <title>Mapping of SUMO sites and analysis of SUMOylation changes induced by external stimuli.</title>
        <authorList>
            <person name="Impens F."/>
            <person name="Radoshevich L."/>
            <person name="Cossart P."/>
            <person name="Ribet D."/>
        </authorList>
    </citation>
    <scope>SUMOYLATION [LARGE SCALE ANALYSIS] AT LYS-164</scope>
    <scope>IDENTIFICATION BY MASS SPECTROMETRY [LARGE SCALE ANALYSIS]</scope>
</reference>
<reference key="63">
    <citation type="journal article" date="2015" name="Cell Rep.">
        <title>Human C6orf211 encodes Armt1, a protein carboxyl methyltransferase that targets PCNA and is linked to the DNA damage response.</title>
        <authorList>
            <person name="Perry J.J."/>
            <person name="Ballard G.D."/>
            <person name="Albert A.E."/>
            <person name="Dobrolecki L.E."/>
            <person name="Malkas L.H."/>
            <person name="Hoelz D.J."/>
        </authorList>
    </citation>
    <scope>METHYLATION</scope>
</reference>
<reference key="64">
    <citation type="journal article" date="2015" name="Cell Rep.">
        <title>SUMO-2 orchestrates chromatin modifiers in response to DNA damage.</title>
        <authorList>
            <person name="Hendriks I.A."/>
            <person name="Treffers L.W."/>
            <person name="Verlaan-de Vries M."/>
            <person name="Olsen J.V."/>
            <person name="Vertegaal A.C."/>
        </authorList>
    </citation>
    <scope>SUMOYLATION [LARGE SCALE ANALYSIS] AT LYS-164</scope>
    <scope>IDENTIFICATION BY MASS SPECTROMETRY [LARGE SCALE ANALYSIS]</scope>
</reference>
<reference key="65">
    <citation type="journal article" date="2015" name="DNA Repair">
        <title>The interaction between ALKBH2 DNA repair enzyme and PCNA is direct, mediated by the hydrophobic pocket of PCNA and perturbed in naturally-occurring ALKBH2 variants.</title>
        <authorList>
            <person name="Fu D."/>
            <person name="Samson L.D."/>
            <person name="Huebscher U."/>
            <person name="van Loon B."/>
        </authorList>
    </citation>
    <scope>INTERACTION WITH ALKBH2</scope>
    <scope>MUTAGENESIS OF 43-SER--VAL-45; 125-GLN--ILE-128 AND 188-VAL--LYS-190</scope>
</reference>
<reference key="66">
    <citation type="journal article" date="2015" name="J. Virol.">
        <title>Bub1 in Complex with LANA Recruits PCNA To Regulate Kaposi's Sarcoma-Associated Herpesvirus Latent Replication and DNA Translesion Synthesis.</title>
        <authorList>
            <person name="Sun Z."/>
            <person name="Jha H.C."/>
            <person name="Robertson E.S."/>
        </authorList>
    </citation>
    <scope>INTERACTION WITH HERPES VIRUS 8 PROTEIN LANA1 (MICROBIAL INFECTION)</scope>
</reference>
<reference key="67">
    <citation type="journal article" date="2015" name="Mol. Cell. Proteomics">
        <title>System-wide analysis of SUMOylation dynamics in response to replication stress reveals novel small ubiquitin-like modified target proteins and acceptor lysines relevant for genome stability.</title>
        <authorList>
            <person name="Xiao Z."/>
            <person name="Chang J.G."/>
            <person name="Hendriks I.A."/>
            <person name="Sigurdsson J.O."/>
            <person name="Olsen J.V."/>
            <person name="Vertegaal A.C."/>
        </authorList>
    </citation>
    <scope>SUMOYLATION [LARGE SCALE ANALYSIS] AT LYS-164</scope>
    <scope>IDENTIFICATION BY MASS SPECTROMETRY [LARGE SCALE ANALYSIS]</scope>
</reference>
<reference key="68">
    <citation type="journal article" date="2015" name="Proteomics">
        <title>N-terminome analysis of the human mitochondrial proteome.</title>
        <authorList>
            <person name="Vaca Jacome A.S."/>
            <person name="Rabilloud T."/>
            <person name="Schaeffer-Reiss C."/>
            <person name="Rompais M."/>
            <person name="Ayoub D."/>
            <person name="Lane L."/>
            <person name="Bairoch A."/>
            <person name="Van Dorsselaer A."/>
            <person name="Carapito C."/>
        </authorList>
    </citation>
    <scope>IDENTIFICATION BY MASS SPECTROMETRY [LARGE SCALE ANALYSIS]</scope>
</reference>
<reference key="69">
    <citation type="journal article" date="2016" name="Cell Discov.">
        <title>TRAIP regulates replication fork recovery and progression via PCNA.</title>
        <authorList>
            <person name="Feng W."/>
            <person name="Guo Y."/>
            <person name="Huang J."/>
            <person name="Deng Y."/>
            <person name="Zang J."/>
            <person name="Huen M.S."/>
        </authorList>
    </citation>
    <scope>INTERACTION WITH TRAIP</scope>
</reference>
<reference key="70">
    <citation type="journal article" date="2016" name="Oncotarget">
        <title>R152C DNA Pol beta mutation impairs base excision repair and induces cellular transformation.</title>
        <authorList>
            <person name="Zhou T."/>
            <person name="Pan F."/>
            <person name="Cao Y."/>
            <person name="Han Y."/>
            <person name="Zhao J."/>
            <person name="Sun H."/>
            <person name="Zhou X."/>
            <person name="Wu X."/>
            <person name="He L."/>
            <person name="Hu Z."/>
            <person name="Chen H."/>
            <person name="Shen B."/>
            <person name="Guo Z."/>
        </authorList>
    </citation>
    <scope>INTERACTION WITH POLB</scope>
</reference>
<reference key="71">
    <citation type="journal article" date="2016" name="PLoS Genet.">
        <title>PCNA-dependent cleavage and degradation of SDE2 regulates response to replication stress.</title>
        <authorList>
            <person name="Jo U."/>
            <person name="Cai W."/>
            <person name="Wang J."/>
            <person name="Kwon Y."/>
            <person name="D'Andrea A.D."/>
            <person name="Kim H."/>
        </authorList>
    </citation>
    <scope>INTERACTION WITH SDE2</scope>
</reference>
<reference key="72">
    <citation type="journal article" date="2017" name="Nat. Genet.">
        <title>Mutations in DONSON disrupt replication fork stability and cause microcephalic dwarfism.</title>
        <authorList>
            <person name="Reynolds J.J."/>
            <person name="Bicknell L.S."/>
            <person name="Carroll P."/>
            <person name="Higgs M.R."/>
            <person name="Shaheen R."/>
            <person name="Murray J.E."/>
            <person name="Papadopoulos D.K."/>
            <person name="Leitch A."/>
            <person name="Murina O."/>
            <person name="Tarnauskaite Z."/>
            <person name="Wessel S.R."/>
            <person name="Zlatanou A."/>
            <person name="Vernet A."/>
            <person name="von Kriegsheim A."/>
            <person name="Mottram R.M."/>
            <person name="Logan C.V."/>
            <person name="Bye H."/>
            <person name="Li Y."/>
            <person name="Brean A."/>
            <person name="Maddirevula S."/>
            <person name="Challis R.C."/>
            <person name="Skouloudaki K."/>
            <person name="Almoisheer A."/>
            <person name="Alsaif H.S."/>
            <person name="Amar A."/>
            <person name="Prescott N.J."/>
            <person name="Bober M.B."/>
            <person name="Duker A."/>
            <person name="Faqeih E."/>
            <person name="Seidahmed M.Z."/>
            <person name="Al Tala S."/>
            <person name="Alswaid A."/>
            <person name="Ahmed S."/>
            <person name="Al-Aama J.Y."/>
            <person name="Altmueller J."/>
            <person name="Al Balwi M."/>
            <person name="Brady A.F."/>
            <person name="Chessa L."/>
            <person name="Cox H."/>
            <person name="Fischetto R."/>
            <person name="Heller R."/>
            <person name="Henderson B.D."/>
            <person name="Hobson E."/>
            <person name="Nuernberg P."/>
            <person name="Percin E.F."/>
            <person name="Peron A."/>
            <person name="Spaccini L."/>
            <person name="Quigley A.J."/>
            <person name="Thakur S."/>
            <person name="Wise C.A."/>
            <person name="Yoon G."/>
            <person name="Alnemer M."/>
            <person name="Tomancak P."/>
            <person name="Yigit G."/>
            <person name="Taylor A.M."/>
            <person name="Reijns M.A."/>
            <person name="Simpson M.A."/>
            <person name="Cortez D."/>
            <person name="Alkuraya F.S."/>
            <person name="Mathew C.G."/>
            <person name="Jackson A.P."/>
            <person name="Stewart G.S."/>
        </authorList>
    </citation>
    <scope>INTERACTION WITH DONSON</scope>
</reference>
<reference key="73">
    <citation type="journal article" date="2017" name="Nat. Struct. Mol. Biol.">
        <title>Site-specific mapping of the human SUMO proteome reveals co-modification with phosphorylation.</title>
        <authorList>
            <person name="Hendriks I.A."/>
            <person name="Lyon D."/>
            <person name="Young C."/>
            <person name="Jensen L.J."/>
            <person name="Vertegaal A.C."/>
            <person name="Nielsen M.L."/>
        </authorList>
    </citation>
    <scope>SUMOYLATION [LARGE SCALE ANALYSIS] AT LYS-164 AND LYS-254</scope>
    <scope>IDENTIFICATION BY MASS SPECTROMETRY [LARGE SCALE ANALYSIS]</scope>
</reference>
<reference key="74">
    <citation type="journal article" date="2018" name="Mol. Cell">
        <title>Removal of RTF2 from Stalled Replisomes Promotes Maintenance of Genome Integrity.</title>
        <authorList>
            <person name="Kottemann M.C."/>
            <person name="Conti B.A."/>
            <person name="Lach F.P."/>
            <person name="Smogorzewska A."/>
        </authorList>
    </citation>
    <scope>INTERACTION WITH DDI2</scope>
</reference>
<reference key="75">
    <citation type="journal article" date="2019" name="Cell">
        <title>HMCES maintains genome integrity by shielding abasic sites in single-strand DNA.</title>
        <authorList>
            <person name="Mohni K.N."/>
            <person name="Wessel S.R."/>
            <person name="Zhao R."/>
            <person name="Wojciechowski A.C."/>
            <person name="Luzwick J.W."/>
            <person name="Layden H."/>
            <person name="Eichman B.F."/>
            <person name="Thompson P.S."/>
            <person name="Mehta K.P.M."/>
            <person name="Cortez D."/>
        </authorList>
    </citation>
    <scope>INTERACTION WITH HMCES</scope>
</reference>
<reference key="76">
    <citation type="journal article" date="2022" name="Nature">
        <title>Fast and efficient DNA replication with purified human proteins.</title>
        <authorList>
            <person name="Baris Y."/>
            <person name="Taylor M.R.G."/>
            <person name="Aria V."/>
            <person name="Yeeles J.T.P."/>
        </authorList>
    </citation>
    <scope>FUNCTION</scope>
</reference>
<reference key="77">
    <citation type="journal article" date="2022" name="Nucleic Acids Res.">
        <title>LncRNA CTBP1-DT-encoded microprotein DDUP sustains DNA damage response signalling to trigger dual DNA repair mechanisms.</title>
        <authorList>
            <person name="Yu R."/>
            <person name="Hu Y."/>
            <person name="Zhang S."/>
            <person name="Li X."/>
            <person name="Tang M."/>
            <person name="Yang M."/>
            <person name="Wu X."/>
            <person name="Li Z."/>
            <person name="Liao X."/>
            <person name="Xu Y."/>
            <person name="Li M."/>
            <person name="Chen S."/>
            <person name="Qian W."/>
            <person name="Gong L.Y."/>
            <person name="Song L."/>
            <person name="Li J."/>
        </authorList>
    </citation>
    <scope>INTERACTION WITH DDUP</scope>
</reference>
<reference key="78">
    <citation type="journal article" date="2023" name="Biochemistry">
        <title>Structural and biochemical characterization of the human angiogenin-proliferating cell nuclear antigen interaction.</title>
        <authorList>
            <person name="Papaioannou O.S.E."/>
            <person name="Tsika A.C."/>
            <person name="Rovoli M."/>
            <person name="Papadopoulos G.E."/>
            <person name="Kontopidis G."/>
            <person name="Spyroulias G.A."/>
            <person name="Leonidas D.D."/>
        </authorList>
    </citation>
    <scope>INTERACTION WITH ANG</scope>
</reference>
<reference key="79">
    <citation type="journal article" date="2024" name="Nat. Commun.">
        <title>GRB2 stabilizes RAD51 at reversed replication forks suppressing genomic instability and innate immunity against cancer.</title>
        <authorList>
            <person name="Ye Z."/>
            <person name="Xu S."/>
            <person name="Shi Y."/>
            <person name="Cheng X."/>
            <person name="Zhang Y."/>
            <person name="Roy S."/>
            <person name="Namjoshi S."/>
            <person name="Longo M.A."/>
            <person name="Link T.M."/>
            <person name="Schlacher K."/>
            <person name="Peng G."/>
            <person name="Yu D."/>
            <person name="Wang B."/>
            <person name="Tainer J.A."/>
            <person name="Ahmed Z."/>
        </authorList>
    </citation>
    <scope>FUNCTION</scope>
    <scope>INTERACTION WITH GRB2</scope>
    <scope>SUBCELLULAR LOCATION</scope>
    <scope>PHOSPHORYLATION AT TYR-211</scope>
</reference>
<reference evidence="71" key="80">
    <citation type="journal article" date="1996" name="Cell">
        <title>Structure of the C-terminal region of p21(WAF1/CIP1) complexed with human PCNA.</title>
        <authorList>
            <person name="Gulbis J.M."/>
            <person name="Kelman Z."/>
            <person name="Hurwitz J."/>
            <person name="O'Donnell M."/>
            <person name="Kuriyan J."/>
        </authorList>
    </citation>
    <scope>X-RAY CRYSTALLOGRAPHY (2.6 ANGSTROMS)</scope>
</reference>
<reference evidence="72" key="81">
    <citation type="journal article" date="2005" name="EMBO J.">
        <title>Structural basis for recruitment of human flap endonuclease 1 to PCNA.</title>
        <authorList>
            <person name="Sakurai S."/>
            <person name="Kitano K."/>
            <person name="Yamaguchi H."/>
            <person name="Hamada K."/>
            <person name="Okada K."/>
            <person name="Fukuda K."/>
            <person name="Uchida M."/>
            <person name="Ohtsuka E."/>
            <person name="Morioka H."/>
            <person name="Hakoshima T."/>
        </authorList>
    </citation>
    <scope>X-RAY CRYSTALLOGRAPHY (2.9 ANGSTROMS) IN COMPLEX WITH FEN1</scope>
    <scope>DISULFIDE BOND</scope>
</reference>
<reference evidence="74" key="82">
    <citation type="journal article" date="2016" name="Biochem. Biophys. Res. Commun.">
        <title>Crystal structure of human PCNA in complex with the PIP box of DVC1.</title>
        <authorList>
            <person name="Wang Y."/>
            <person name="Xu M."/>
            <person name="Jiang T."/>
        </authorList>
    </citation>
    <scope>X-RAY CRYSTALLOGRAPHY (2.94 ANGSTROMS) IN COMPLEX WITH SPRTN</scope>
    <scope>DISULFIDE BOND</scope>
</reference>
<reference evidence="73" key="83">
    <citation type="journal article" date="2016" name="J. Cell Biol.">
        <title>TRAIP is a PCNA-binding ubiquitin ligase that protects genome stability after replication stress.</title>
        <authorList>
            <person name="Hoffmann S."/>
            <person name="Smedegaard S."/>
            <person name="Nakamura K."/>
            <person name="Mortuza G.B."/>
            <person name="Raschle M."/>
            <person name="Ibanez de Opakua A."/>
            <person name="Oka Y."/>
            <person name="Feng Y."/>
            <person name="Blanco F.J."/>
            <person name="Mann M."/>
            <person name="Montoya G."/>
            <person name="Groth A."/>
            <person name="Bekker-Jensen S."/>
            <person name="Mailand N."/>
        </authorList>
    </citation>
    <scope>X-RAY CRYSTALLOGRAPHY (2.20 ANGSTROMS) OF 2-254 IN COMPLEX WITH TRAIP</scope>
</reference>
<reference evidence="75" key="84">
    <citation type="journal article" date="2017" name="Biochem. Biophys. Res. Commun.">
        <title>Structure insights into the molecular mechanism of the interaction between UHRF2 and PCNA.</title>
        <authorList>
            <person name="Chen W."/>
            <person name="Wu M."/>
            <person name="Hang T."/>
            <person name="Wang C."/>
            <person name="Zhang X."/>
            <person name="Zang J."/>
        </authorList>
    </citation>
    <scope>X-RAY CRYSTALLOGRAPHY (2.20 ANGSTROMS)</scope>
    <scope>INTERACTION WITH UHRF2</scope>
    <scope>MUTAGENESIS OF MET-40; ILE-128; TYR-250 AND ALA-252</scope>
</reference>
<reference evidence="76" key="85">
    <citation type="journal article" date="2023" name="Cell Rep.">
        <title>ERCC6L2 mitigates replication stress and promotes centromere stability.</title>
        <authorList>
            <person name="Carnie C.J."/>
            <person name="Armstrong L."/>
            <person name="Sebesta M."/>
            <person name="Ariza A."/>
            <person name="Wang X."/>
            <person name="Graham E."/>
            <person name="Zhu K."/>
            <person name="Ahel D."/>
        </authorList>
    </citation>
    <scope>X-RAY CRYSTALLOGRAPHY (2.73 ANGSTROMS) IN COMPLEX WITH ERCC6L2</scope>
    <scope>INTERACTION WITH ERCC6L2</scope>
    <scope>DISULFIDE BONDS</scope>
</reference>
<accession>P12004</accession>
<accession>B2R897</accession>
<accession>D3DW02</accession>
<protein>
    <recommendedName>
        <fullName>Proliferating cell nuclear antigen</fullName>
        <shortName>PCNA</shortName>
    </recommendedName>
    <alternativeName>
        <fullName>Cyclin</fullName>
    </alternativeName>
</protein>
<dbReference type="EMBL" id="M15796">
    <property type="protein sequence ID" value="AAA35736.1"/>
    <property type="molecule type" value="mRNA"/>
</dbReference>
<dbReference type="EMBL" id="J04718">
    <property type="protein sequence ID" value="AAA60040.1"/>
    <property type="molecule type" value="Genomic_DNA"/>
</dbReference>
<dbReference type="EMBL" id="AF527838">
    <property type="protein sequence ID" value="AAM78556.1"/>
    <property type="molecule type" value="Genomic_DNA"/>
</dbReference>
<dbReference type="EMBL" id="AK313286">
    <property type="protein sequence ID" value="BAG36094.1"/>
    <property type="molecule type" value="mRNA"/>
</dbReference>
<dbReference type="EMBL" id="AL121924">
    <property type="status" value="NOT_ANNOTATED_CDS"/>
    <property type="molecule type" value="Genomic_DNA"/>
</dbReference>
<dbReference type="EMBL" id="CH471133">
    <property type="protein sequence ID" value="EAX10428.1"/>
    <property type="molecule type" value="Genomic_DNA"/>
</dbReference>
<dbReference type="EMBL" id="CH471133">
    <property type="protein sequence ID" value="EAX10429.1"/>
    <property type="molecule type" value="Genomic_DNA"/>
</dbReference>
<dbReference type="EMBL" id="CH471133">
    <property type="protein sequence ID" value="EAX10430.1"/>
    <property type="molecule type" value="Genomic_DNA"/>
</dbReference>
<dbReference type="EMBL" id="BC000491">
    <property type="protein sequence ID" value="AAH00491.1"/>
    <property type="molecule type" value="mRNA"/>
</dbReference>
<dbReference type="EMBL" id="BC062439">
    <property type="protein sequence ID" value="AAH62439.1"/>
    <property type="molecule type" value="mRNA"/>
</dbReference>
<dbReference type="CCDS" id="CCDS13087.1"/>
<dbReference type="PIR" id="A27445">
    <property type="entry name" value="WMHUET"/>
</dbReference>
<dbReference type="RefSeq" id="NP_002583.1">
    <property type="nucleotide sequence ID" value="NM_002592.2"/>
</dbReference>
<dbReference type="RefSeq" id="NP_872590.1">
    <property type="nucleotide sequence ID" value="NM_182649.2"/>
</dbReference>
<dbReference type="PDB" id="1AXC">
    <property type="method" value="X-ray"/>
    <property type="resolution" value="2.60 A"/>
    <property type="chains" value="A/C/E=1-261"/>
</dbReference>
<dbReference type="PDB" id="1U76">
    <property type="method" value="X-ray"/>
    <property type="resolution" value="2.60 A"/>
    <property type="chains" value="A/C/E=1-261"/>
</dbReference>
<dbReference type="PDB" id="1U7B">
    <property type="method" value="X-ray"/>
    <property type="resolution" value="1.88 A"/>
    <property type="chains" value="A=1-261"/>
</dbReference>
<dbReference type="PDB" id="1UL1">
    <property type="method" value="X-ray"/>
    <property type="resolution" value="2.90 A"/>
    <property type="chains" value="A/B/C=1-261"/>
</dbReference>
<dbReference type="PDB" id="1VYJ">
    <property type="method" value="X-ray"/>
    <property type="resolution" value="2.80 A"/>
    <property type="chains" value="A/C/E/G/I/K=1-261"/>
</dbReference>
<dbReference type="PDB" id="1VYM">
    <property type="method" value="X-ray"/>
    <property type="resolution" value="2.30 A"/>
    <property type="chains" value="A/B/C=1-261"/>
</dbReference>
<dbReference type="PDB" id="1W60">
    <property type="method" value="X-ray"/>
    <property type="resolution" value="3.15 A"/>
    <property type="chains" value="A/B=1-261"/>
</dbReference>
<dbReference type="PDB" id="2ZVK">
    <property type="method" value="X-ray"/>
    <property type="resolution" value="2.70 A"/>
    <property type="chains" value="A/B/C=1-261"/>
</dbReference>
<dbReference type="PDB" id="2ZVL">
    <property type="method" value="X-ray"/>
    <property type="resolution" value="2.50 A"/>
    <property type="chains" value="A/B/C/D/E/F=1-261"/>
</dbReference>
<dbReference type="PDB" id="2ZVM">
    <property type="method" value="X-ray"/>
    <property type="resolution" value="2.30 A"/>
    <property type="chains" value="A/B/C=1-261"/>
</dbReference>
<dbReference type="PDB" id="3JA9">
    <property type="method" value="EM"/>
    <property type="resolution" value="22.00 A"/>
    <property type="chains" value="A/B/C=1-261"/>
</dbReference>
<dbReference type="PDB" id="3P87">
    <property type="method" value="X-ray"/>
    <property type="resolution" value="2.99 A"/>
    <property type="chains" value="A/B/C/D/E/F=1-261"/>
</dbReference>
<dbReference type="PDB" id="3TBL">
    <property type="method" value="X-ray"/>
    <property type="resolution" value="2.90 A"/>
    <property type="chains" value="A/B/C=1-261"/>
</dbReference>
<dbReference type="PDB" id="3VKX">
    <property type="method" value="X-ray"/>
    <property type="resolution" value="2.10 A"/>
    <property type="chains" value="A=1-261"/>
</dbReference>
<dbReference type="PDB" id="3WGW">
    <property type="method" value="X-ray"/>
    <property type="resolution" value="2.80 A"/>
    <property type="chains" value="A/B=1-261"/>
</dbReference>
<dbReference type="PDB" id="4D2G">
    <property type="method" value="X-ray"/>
    <property type="resolution" value="2.65 A"/>
    <property type="chains" value="A/B/C=1-261"/>
</dbReference>
<dbReference type="PDB" id="4RJF">
    <property type="method" value="X-ray"/>
    <property type="resolution" value="2.01 A"/>
    <property type="chains" value="A/C/E=1-261"/>
</dbReference>
<dbReference type="PDB" id="4ZTD">
    <property type="method" value="X-ray"/>
    <property type="resolution" value="2.20 A"/>
    <property type="chains" value="A/B/C=2-254"/>
</dbReference>
<dbReference type="PDB" id="5E0T">
    <property type="method" value="X-ray"/>
    <property type="resolution" value="2.67 A"/>
    <property type="chains" value="A/B/C=1-261"/>
</dbReference>
<dbReference type="PDB" id="5E0U">
    <property type="method" value="X-ray"/>
    <property type="resolution" value="1.93 A"/>
    <property type="chains" value="A/B/C=1-261"/>
</dbReference>
<dbReference type="PDB" id="5E0V">
    <property type="method" value="X-ray"/>
    <property type="resolution" value="2.07 A"/>
    <property type="chains" value="A/B=1-261"/>
</dbReference>
<dbReference type="PDB" id="5IY4">
    <property type="method" value="X-ray"/>
    <property type="resolution" value="2.94 A"/>
    <property type="chains" value="A/C/E=1-261"/>
</dbReference>
<dbReference type="PDB" id="5MAV">
    <property type="method" value="X-ray"/>
    <property type="resolution" value="2.58 A"/>
    <property type="chains" value="A/B/C/D/E/F=1-261"/>
</dbReference>
<dbReference type="PDB" id="5MLO">
    <property type="method" value="X-ray"/>
    <property type="resolution" value="1.96 A"/>
    <property type="chains" value="A/C/E=1-261"/>
</dbReference>
<dbReference type="PDB" id="5MLW">
    <property type="method" value="X-ray"/>
    <property type="resolution" value="2.45 A"/>
    <property type="chains" value="A/C/E=1-261"/>
</dbReference>
<dbReference type="PDB" id="5MOM">
    <property type="method" value="X-ray"/>
    <property type="resolution" value="2.27 A"/>
    <property type="chains" value="A/B/C=1-258"/>
</dbReference>
<dbReference type="PDB" id="5YCO">
    <property type="method" value="X-ray"/>
    <property type="resolution" value="2.20 A"/>
    <property type="chains" value="A/B/C/D=1-261"/>
</dbReference>
<dbReference type="PDB" id="5YD8">
    <property type="method" value="X-ray"/>
    <property type="resolution" value="2.30 A"/>
    <property type="chains" value="X/Y/Z=1-261"/>
</dbReference>
<dbReference type="PDB" id="6CBI">
    <property type="method" value="X-ray"/>
    <property type="resolution" value="2.75 A"/>
    <property type="chains" value="A/B/C/D/E/F=1-261"/>
</dbReference>
<dbReference type="PDB" id="6EHT">
    <property type="method" value="X-ray"/>
    <property type="resolution" value="3.20 A"/>
    <property type="chains" value="A/B=1-254, C=1-255"/>
</dbReference>
<dbReference type="PDB" id="6FCM">
    <property type="method" value="X-ray"/>
    <property type="resolution" value="2.80 A"/>
    <property type="chains" value="A/C/E=1-261"/>
</dbReference>
<dbReference type="PDB" id="6FCN">
    <property type="method" value="X-ray"/>
    <property type="resolution" value="3.22 A"/>
    <property type="chains" value="A/C/E=1-261"/>
</dbReference>
<dbReference type="PDB" id="6GIS">
    <property type="method" value="X-ray"/>
    <property type="resolution" value="2.82 A"/>
    <property type="chains" value="A/B/C=1-261"/>
</dbReference>
<dbReference type="PDB" id="6GWS">
    <property type="method" value="X-ray"/>
    <property type="resolution" value="2.90 A"/>
    <property type="chains" value="A/B/C=1-261"/>
</dbReference>
<dbReference type="PDB" id="6HVO">
    <property type="method" value="X-ray"/>
    <property type="resolution" value="2.10 A"/>
    <property type="chains" value="A/B/C=1-261"/>
</dbReference>
<dbReference type="PDB" id="6K3A">
    <property type="method" value="X-ray"/>
    <property type="resolution" value="2.30 A"/>
    <property type="chains" value="A/C/E=1-261"/>
</dbReference>
<dbReference type="PDB" id="6QC0">
    <property type="method" value="X-ray"/>
    <property type="resolution" value="3.50 A"/>
    <property type="chains" value="A/C/E=1-261"/>
</dbReference>
<dbReference type="PDB" id="6QCG">
    <property type="method" value="X-ray"/>
    <property type="resolution" value="3.40 A"/>
    <property type="chains" value="A/B/C/D/E/F=1-261"/>
</dbReference>
<dbReference type="PDB" id="6S1M">
    <property type="method" value="EM"/>
    <property type="resolution" value="4.27 A"/>
    <property type="chains" value="E/F/G=1-261"/>
</dbReference>
<dbReference type="PDB" id="6S1N">
    <property type="method" value="EM"/>
    <property type="resolution" value="4.86 A"/>
    <property type="chains" value="E/F/G=1-261"/>
</dbReference>
<dbReference type="PDB" id="6S1O">
    <property type="method" value="EM"/>
    <property type="resolution" value="8.10 A"/>
    <property type="chains" value="E/F/G=1-261"/>
</dbReference>
<dbReference type="PDB" id="6TNY">
    <property type="method" value="EM"/>
    <property type="resolution" value="3.08 A"/>
    <property type="chains" value="E/F/G=1-261"/>
</dbReference>
<dbReference type="PDB" id="6TNZ">
    <property type="method" value="EM"/>
    <property type="resolution" value="4.05 A"/>
    <property type="chains" value="E/F/G=1-261"/>
</dbReference>
<dbReference type="PDB" id="6VVO">
    <property type="method" value="EM"/>
    <property type="resolution" value="3.40 A"/>
    <property type="chains" value="F/G/H=1-261"/>
</dbReference>
<dbReference type="PDB" id="7EFA">
    <property type="method" value="X-ray"/>
    <property type="resolution" value="2.70 A"/>
    <property type="chains" value="A=1-261"/>
</dbReference>
<dbReference type="PDB" id="7KQ0">
    <property type="method" value="X-ray"/>
    <property type="resolution" value="2.40 A"/>
    <property type="chains" value="A/C/E=1-259"/>
</dbReference>
<dbReference type="PDB" id="7KQ1">
    <property type="method" value="X-ray"/>
    <property type="resolution" value="3.30 A"/>
    <property type="chains" value="A/C/E=1-259"/>
</dbReference>
<dbReference type="PDB" id="7M5L">
    <property type="method" value="X-ray"/>
    <property type="resolution" value="3.00 A"/>
    <property type="chains" value="A/B/C=1-258"/>
</dbReference>
<dbReference type="PDB" id="7M5M">
    <property type="method" value="X-ray"/>
    <property type="resolution" value="3.00 A"/>
    <property type="chains" value="A/B/C=1-259"/>
</dbReference>
<dbReference type="PDB" id="7M5N">
    <property type="method" value="X-ray"/>
    <property type="resolution" value="3.11 A"/>
    <property type="chains" value="A/B/C=1-259"/>
</dbReference>
<dbReference type="PDB" id="7NV0">
    <property type="method" value="EM"/>
    <property type="resolution" value="3.40 A"/>
    <property type="chains" value="B/C/D=1-261"/>
</dbReference>
<dbReference type="PDB" id="7NV1">
    <property type="method" value="EM"/>
    <property type="resolution" value="6.40 A"/>
    <property type="chains" value="B/C/D=1-261"/>
</dbReference>
<dbReference type="PDB" id="7QNZ">
    <property type="method" value="EM"/>
    <property type="resolution" value="4.58 A"/>
    <property type="chains" value="B/C/D=1-261"/>
</dbReference>
<dbReference type="PDB" id="7QO1">
    <property type="method" value="EM"/>
    <property type="resolution" value="4.40 A"/>
    <property type="chains" value="B/F/G=1-261"/>
</dbReference>
<dbReference type="PDB" id="8B8T">
    <property type="method" value="EM"/>
    <property type="resolution" value="4.20 A"/>
    <property type="chains" value="E/F/G=1-255"/>
</dbReference>
<dbReference type="PDB" id="8COB">
    <property type="method" value="X-ray"/>
    <property type="resolution" value="2.73 A"/>
    <property type="chains" value="A/C/E=1-261"/>
</dbReference>
<dbReference type="PDB" id="8E84">
    <property type="method" value="X-ray"/>
    <property type="resolution" value="3.10 A"/>
    <property type="chains" value="A/B/C=1-261"/>
</dbReference>
<dbReference type="PDB" id="8F5Q">
    <property type="method" value="X-ray"/>
    <property type="resolution" value="1.90 A"/>
    <property type="chains" value="A/C/E=1-259"/>
</dbReference>
<dbReference type="PDB" id="8GCJ">
    <property type="method" value="X-ray"/>
    <property type="resolution" value="2.85 A"/>
    <property type="chains" value="A/B/C/D/E/F=1-261"/>
</dbReference>
<dbReference type="PDB" id="8GL9">
    <property type="method" value="X-ray"/>
    <property type="resolution" value="2.81 A"/>
    <property type="chains" value="A/B/C/D=1-261"/>
</dbReference>
<dbReference type="PDB" id="8GLA">
    <property type="method" value="X-ray"/>
    <property type="resolution" value="3.77 A"/>
    <property type="chains" value="A/B/C/D=1-261"/>
</dbReference>
<dbReference type="PDB" id="8UI7">
    <property type="method" value="EM"/>
    <property type="resolution" value="4.20 A"/>
    <property type="chains" value="F/G/H=1-261"/>
</dbReference>
<dbReference type="PDB" id="8UI8">
    <property type="method" value="EM"/>
    <property type="resolution" value="3.10 A"/>
    <property type="chains" value="F/G=1-261"/>
</dbReference>
<dbReference type="PDB" id="8UI9">
    <property type="method" value="EM"/>
    <property type="resolution" value="3.50 A"/>
    <property type="chains" value="F/G/H=1-261"/>
</dbReference>
<dbReference type="PDB" id="8UII">
    <property type="method" value="EM"/>
    <property type="resolution" value="3.04 A"/>
    <property type="chains" value="F/G/H=1-261"/>
</dbReference>
<dbReference type="PDB" id="8UMT">
    <property type="method" value="EM"/>
    <property type="resolution" value="3.33 A"/>
    <property type="chains" value="F/G/H=1-261"/>
</dbReference>
<dbReference type="PDB" id="8UMU">
    <property type="method" value="EM"/>
    <property type="resolution" value="3.16 A"/>
    <property type="chains" value="F/G/H=1-261"/>
</dbReference>
<dbReference type="PDB" id="8UMV">
    <property type="method" value="EM"/>
    <property type="resolution" value="2.75 A"/>
    <property type="chains" value="F/G/H=1-261"/>
</dbReference>
<dbReference type="PDB" id="8UMW">
    <property type="method" value="EM"/>
    <property type="resolution" value="2.93 A"/>
    <property type="chains" value="F/G/H=1-261"/>
</dbReference>
<dbReference type="PDB" id="8UMY">
    <property type="method" value="EM"/>
    <property type="resolution" value="2.83 A"/>
    <property type="chains" value="F/G/H=1-261"/>
</dbReference>
<dbReference type="PDB" id="8UN0">
    <property type="method" value="EM"/>
    <property type="resolution" value="3.00 A"/>
    <property type="chains" value="F/G/H=1-261"/>
</dbReference>
<dbReference type="PDB" id="8YJH">
    <property type="method" value="EM"/>
    <property type="resolution" value="3.68 A"/>
    <property type="chains" value="A/B/C=1-261"/>
</dbReference>
<dbReference type="PDB" id="8YJL">
    <property type="method" value="EM"/>
    <property type="resolution" value="3.51 A"/>
    <property type="chains" value="A/B/C=1-261"/>
</dbReference>
<dbReference type="PDB" id="8YJQ">
    <property type="method" value="EM"/>
    <property type="resolution" value="3.51 A"/>
    <property type="chains" value="A/B/C=1-261"/>
</dbReference>
<dbReference type="PDB" id="8YJR">
    <property type="method" value="EM"/>
    <property type="resolution" value="3.51 A"/>
    <property type="chains" value="A/B/C=1-261"/>
</dbReference>
<dbReference type="PDB" id="8YJS">
    <property type="method" value="EM"/>
    <property type="resolution" value="3.55 A"/>
    <property type="chains" value="A/B/C=1-261"/>
</dbReference>
<dbReference type="PDB" id="8YJU">
    <property type="method" value="EM"/>
    <property type="resolution" value="3.78 A"/>
    <property type="chains" value="A/B/C=1-261"/>
</dbReference>
<dbReference type="PDB" id="8YJV">
    <property type="method" value="EM"/>
    <property type="resolution" value="3.51 A"/>
    <property type="chains" value="A/B/C=1-261"/>
</dbReference>
<dbReference type="PDB" id="8YJW">
    <property type="method" value="EM"/>
    <property type="resolution" value="3.55 A"/>
    <property type="chains" value="A/B/C=1-261"/>
</dbReference>
<dbReference type="PDB" id="8YJZ">
    <property type="method" value="EM"/>
    <property type="resolution" value="5.15 A"/>
    <property type="chains" value="A/B/C=1-261"/>
</dbReference>
<dbReference type="PDB" id="9B8S">
    <property type="method" value="EM"/>
    <property type="resolution" value="5.01 A"/>
    <property type="chains" value="B/C/D=1-261"/>
</dbReference>
<dbReference type="PDB" id="9B8T">
    <property type="method" value="EM"/>
    <property type="resolution" value="2.95 A"/>
    <property type="chains" value="B/C/D=1-261"/>
</dbReference>
<dbReference type="PDB" id="9CG4">
    <property type="method" value="EM"/>
    <property type="resolution" value="3.37 A"/>
    <property type="chains" value="B/C/D=1-261"/>
</dbReference>
<dbReference type="PDB" id="9CHM">
    <property type="method" value="EM"/>
    <property type="resolution" value="3.47 A"/>
    <property type="chains" value="B/C/D=1-261"/>
</dbReference>
<dbReference type="PDB" id="9CL7">
    <property type="method" value="EM"/>
    <property type="resolution" value="3.83 A"/>
    <property type="chains" value="B/C/D=1-261"/>
</dbReference>
<dbReference type="PDB" id="9CMA">
    <property type="method" value="EM"/>
    <property type="resolution" value="3.97 A"/>
    <property type="chains" value="B/C/D=1-261"/>
</dbReference>
<dbReference type="PDB" id="9EOA">
    <property type="method" value="EM"/>
    <property type="resolution" value="3.27 A"/>
    <property type="chains" value="F/G/H=1-256"/>
</dbReference>
<dbReference type="PDB" id="9F6D">
    <property type="method" value="EM"/>
    <property type="resolution" value="3.60 A"/>
    <property type="chains" value="B/C/D=1-261"/>
</dbReference>
<dbReference type="PDB" id="9F6E">
    <property type="method" value="EM"/>
    <property type="resolution" value="3.74 A"/>
    <property type="chains" value="B/C/D=1-261"/>
</dbReference>
<dbReference type="PDB" id="9F6F">
    <property type="method" value="EM"/>
    <property type="resolution" value="3.75 A"/>
    <property type="chains" value="B/C/D=1-261"/>
</dbReference>
<dbReference type="PDB" id="9GY0">
    <property type="method" value="EM"/>
    <property type="resolution" value="3.42 A"/>
    <property type="chains" value="E/F/G=1-261"/>
</dbReference>
<dbReference type="PDBsum" id="1AXC"/>
<dbReference type="PDBsum" id="1U76"/>
<dbReference type="PDBsum" id="1U7B"/>
<dbReference type="PDBsum" id="1UL1"/>
<dbReference type="PDBsum" id="1VYJ"/>
<dbReference type="PDBsum" id="1VYM"/>
<dbReference type="PDBsum" id="1W60"/>
<dbReference type="PDBsum" id="2ZVK"/>
<dbReference type="PDBsum" id="2ZVL"/>
<dbReference type="PDBsum" id="2ZVM"/>
<dbReference type="PDBsum" id="3JA9"/>
<dbReference type="PDBsum" id="3P87"/>
<dbReference type="PDBsum" id="3TBL"/>
<dbReference type="PDBsum" id="3VKX"/>
<dbReference type="PDBsum" id="3WGW"/>
<dbReference type="PDBsum" id="4D2G"/>
<dbReference type="PDBsum" id="4RJF"/>
<dbReference type="PDBsum" id="4ZTD"/>
<dbReference type="PDBsum" id="5E0T"/>
<dbReference type="PDBsum" id="5E0U"/>
<dbReference type="PDBsum" id="5E0V"/>
<dbReference type="PDBsum" id="5IY4"/>
<dbReference type="PDBsum" id="5MAV"/>
<dbReference type="PDBsum" id="5MLO"/>
<dbReference type="PDBsum" id="5MLW"/>
<dbReference type="PDBsum" id="5MOM"/>
<dbReference type="PDBsum" id="5YCO"/>
<dbReference type="PDBsum" id="5YD8"/>
<dbReference type="PDBsum" id="6CBI"/>
<dbReference type="PDBsum" id="6EHT"/>
<dbReference type="PDBsum" id="6FCM"/>
<dbReference type="PDBsum" id="6FCN"/>
<dbReference type="PDBsum" id="6GIS"/>
<dbReference type="PDBsum" id="6GWS"/>
<dbReference type="PDBsum" id="6HVO"/>
<dbReference type="PDBsum" id="6K3A"/>
<dbReference type="PDBsum" id="6QC0"/>
<dbReference type="PDBsum" id="6QCG"/>
<dbReference type="PDBsum" id="6S1M"/>
<dbReference type="PDBsum" id="6S1N"/>
<dbReference type="PDBsum" id="6S1O"/>
<dbReference type="PDBsum" id="6TNY"/>
<dbReference type="PDBsum" id="6TNZ"/>
<dbReference type="PDBsum" id="6VVO"/>
<dbReference type="PDBsum" id="7EFA"/>
<dbReference type="PDBsum" id="7KQ0"/>
<dbReference type="PDBsum" id="7KQ1"/>
<dbReference type="PDBsum" id="7M5L"/>
<dbReference type="PDBsum" id="7M5M"/>
<dbReference type="PDBsum" id="7M5N"/>
<dbReference type="PDBsum" id="7NV0"/>
<dbReference type="PDBsum" id="7NV1"/>
<dbReference type="PDBsum" id="7QNZ"/>
<dbReference type="PDBsum" id="7QO1"/>
<dbReference type="PDBsum" id="8B8T"/>
<dbReference type="PDBsum" id="8COB"/>
<dbReference type="PDBsum" id="8E84"/>
<dbReference type="PDBsum" id="8F5Q"/>
<dbReference type="PDBsum" id="8GCJ"/>
<dbReference type="PDBsum" id="8GL9"/>
<dbReference type="PDBsum" id="8GLA"/>
<dbReference type="PDBsum" id="8UI7"/>
<dbReference type="PDBsum" id="8UI8"/>
<dbReference type="PDBsum" id="8UI9"/>
<dbReference type="PDBsum" id="8UII"/>
<dbReference type="PDBsum" id="8UMT"/>
<dbReference type="PDBsum" id="8UMU"/>
<dbReference type="PDBsum" id="8UMV"/>
<dbReference type="PDBsum" id="8UMW"/>
<dbReference type="PDBsum" id="8UMY"/>
<dbReference type="PDBsum" id="8UN0"/>
<dbReference type="PDBsum" id="8YJH"/>
<dbReference type="PDBsum" id="8YJL"/>
<dbReference type="PDBsum" id="8YJQ"/>
<dbReference type="PDBsum" id="8YJR"/>
<dbReference type="PDBsum" id="8YJS"/>
<dbReference type="PDBsum" id="8YJU"/>
<dbReference type="PDBsum" id="8YJV"/>
<dbReference type="PDBsum" id="8YJW"/>
<dbReference type="PDBsum" id="8YJZ"/>
<dbReference type="PDBsum" id="9B8S"/>
<dbReference type="PDBsum" id="9B8T"/>
<dbReference type="PDBsum" id="9CG4"/>
<dbReference type="PDBsum" id="9CHM"/>
<dbReference type="PDBsum" id="9CL7"/>
<dbReference type="PDBsum" id="9CMA"/>
<dbReference type="PDBsum" id="9EOA"/>
<dbReference type="PDBsum" id="9F6D"/>
<dbReference type="PDBsum" id="9F6E"/>
<dbReference type="PDBsum" id="9F6F"/>
<dbReference type="PDBsum" id="9GY0"/>
<dbReference type="BMRB" id="P12004"/>
<dbReference type="EMDB" id="EMD-10080"/>
<dbReference type="EMDB" id="EMD-10081"/>
<dbReference type="EMDB" id="EMD-10082"/>
<dbReference type="EMDB" id="EMD-10539"/>
<dbReference type="EMDB" id="EMD-10540"/>
<dbReference type="EMDB" id="EMD-12601"/>
<dbReference type="EMDB" id="EMD-12602"/>
<dbReference type="EMDB" id="EMD-14078"/>
<dbReference type="EMDB" id="EMD-14080"/>
<dbReference type="EMDB" id="EMD-15921"/>
<dbReference type="EMDB" id="EMD-19850"/>
<dbReference type="EMDB" id="EMD-21405"/>
<dbReference type="EMDB" id="EMD-39342"/>
<dbReference type="EMDB" id="EMD-39344"/>
<dbReference type="EMDB" id="EMD-39346"/>
<dbReference type="EMDB" id="EMD-39347"/>
<dbReference type="EMDB" id="EMD-39348"/>
<dbReference type="EMDB" id="EMD-39350"/>
<dbReference type="EMDB" id="EMD-39351"/>
<dbReference type="EMDB" id="EMD-39352"/>
<dbReference type="EMDB" id="EMD-39354"/>
<dbReference type="EMDB" id="EMD-42287"/>
<dbReference type="EMDB" id="EMD-42288"/>
<dbReference type="EMDB" id="EMD-42289"/>
<dbReference type="EMDB" id="EMD-42295"/>
<dbReference type="EMDB" id="EMD-42383"/>
<dbReference type="EMDB" id="EMD-42384"/>
<dbReference type="EMDB" id="EMD-42385"/>
<dbReference type="EMDB" id="EMD-42386"/>
<dbReference type="EMDB" id="EMD-42388"/>
<dbReference type="EMDB" id="EMD-42389"/>
<dbReference type="EMDB" id="EMD-44357"/>
<dbReference type="EMDB" id="EMD-44358"/>
<dbReference type="EMDB" id="EMD-45568"/>
<dbReference type="EMDB" id="EMD-45590"/>
<dbReference type="EMDB" id="EMD-45664"/>
<dbReference type="EMDB" id="EMD-45745"/>
<dbReference type="EMDB" id="EMD-50222"/>
<dbReference type="EMDB" id="EMD-50223"/>
<dbReference type="EMDB" id="EMD-50224"/>
<dbReference type="EMDB" id="EMD-51680"/>
<dbReference type="SASBDB" id="P12004"/>
<dbReference type="SMR" id="P12004"/>
<dbReference type="BioGRID" id="111142">
    <property type="interactions" value="516"/>
</dbReference>
<dbReference type="ComplexPortal" id="CPX-538">
    <property type="entry name" value="PCNA homotrimer"/>
</dbReference>
<dbReference type="CORUM" id="P12004"/>
<dbReference type="DIP" id="DIP-1098N"/>
<dbReference type="ELM" id="P12004"/>
<dbReference type="FunCoup" id="P12004">
    <property type="interactions" value="3289"/>
</dbReference>
<dbReference type="IntAct" id="P12004">
    <property type="interactions" value="467"/>
</dbReference>
<dbReference type="MINT" id="P12004"/>
<dbReference type="STRING" id="9606.ENSP00000368458"/>
<dbReference type="BindingDB" id="P12004"/>
<dbReference type="ChEMBL" id="CHEMBL2346488"/>
<dbReference type="DrugBank" id="DB00945">
    <property type="generic name" value="Acetylsalicylic acid"/>
</dbReference>
<dbReference type="DrugBank" id="DB03619">
    <property type="generic name" value="Deoxycholic acid"/>
</dbReference>
<dbReference type="DrugBank" id="DB00279">
    <property type="generic name" value="Liothyronine"/>
</dbReference>
<dbReference type="DrugCentral" id="P12004"/>
<dbReference type="MoonDB" id="P12004">
    <property type="type" value="Predicted"/>
</dbReference>
<dbReference type="GlyCosmos" id="P12004">
    <property type="glycosylation" value="1 site, 1 glycan"/>
</dbReference>
<dbReference type="GlyGen" id="P12004">
    <property type="glycosylation" value="4 sites, 1 N-linked glycan (1 site), 1 O-linked glycan (1 site)"/>
</dbReference>
<dbReference type="iPTMnet" id="P12004"/>
<dbReference type="MetOSite" id="P12004"/>
<dbReference type="PhosphoSitePlus" id="P12004"/>
<dbReference type="SwissPalm" id="P12004"/>
<dbReference type="BioMuta" id="PCNA"/>
<dbReference type="DMDM" id="129694"/>
<dbReference type="CPTAC" id="CPTAC-1224"/>
<dbReference type="CPTAC" id="CPTAC-1225"/>
<dbReference type="CPTAC" id="CPTAC-3242"/>
<dbReference type="CPTAC" id="CPTAC-3243"/>
<dbReference type="CPTAC" id="CPTAC-3244"/>
<dbReference type="CPTAC" id="CPTAC-3245"/>
<dbReference type="CPTAC" id="CPTAC-558"/>
<dbReference type="CPTAC" id="CPTAC-559"/>
<dbReference type="CPTAC" id="CPTAC-722"/>
<dbReference type="jPOST" id="P12004"/>
<dbReference type="MassIVE" id="P12004"/>
<dbReference type="PaxDb" id="9606-ENSP00000368458"/>
<dbReference type="PeptideAtlas" id="P12004"/>
<dbReference type="ProteomicsDB" id="52816"/>
<dbReference type="Pumba" id="P12004"/>
<dbReference type="TopDownProteomics" id="P12004"/>
<dbReference type="ABCD" id="P12004">
    <property type="antibodies" value="20 sequenced antibodies"/>
</dbReference>
<dbReference type="Antibodypedia" id="3769">
    <property type="antibodies" value="2741 antibodies from 54 providers"/>
</dbReference>
<dbReference type="CPTC" id="P12004">
    <property type="antibodies" value="4 antibodies"/>
</dbReference>
<dbReference type="DNASU" id="5111"/>
<dbReference type="Ensembl" id="ENST00000379143.10">
    <property type="protein sequence ID" value="ENSP00000368438.5"/>
    <property type="gene ID" value="ENSG00000132646.11"/>
</dbReference>
<dbReference type="Ensembl" id="ENST00000379160.3">
    <property type="protein sequence ID" value="ENSP00000368458.3"/>
    <property type="gene ID" value="ENSG00000132646.11"/>
</dbReference>
<dbReference type="GeneID" id="5111"/>
<dbReference type="KEGG" id="hsa:5111"/>
<dbReference type="MANE-Select" id="ENST00000379143.10">
    <property type="protein sequence ID" value="ENSP00000368438.5"/>
    <property type="RefSeq nucleotide sequence ID" value="NM_182649.2"/>
    <property type="RefSeq protein sequence ID" value="NP_872590.1"/>
</dbReference>
<dbReference type="UCSC" id="uc002wlp.4">
    <property type="organism name" value="human"/>
</dbReference>
<dbReference type="AGR" id="HGNC:8729"/>
<dbReference type="CTD" id="5111"/>
<dbReference type="DisGeNET" id="5111"/>
<dbReference type="GeneCards" id="PCNA"/>
<dbReference type="HGNC" id="HGNC:8729">
    <property type="gene designation" value="PCNA"/>
</dbReference>
<dbReference type="HPA" id="ENSG00000132646">
    <property type="expression patterns" value="Tissue enhanced (bone)"/>
</dbReference>
<dbReference type="MalaCards" id="PCNA"/>
<dbReference type="MIM" id="176740">
    <property type="type" value="gene"/>
</dbReference>
<dbReference type="MIM" id="615919">
    <property type="type" value="phenotype"/>
</dbReference>
<dbReference type="neXtProt" id="NX_P12004"/>
<dbReference type="OpenTargets" id="ENSG00000132646"/>
<dbReference type="Orphanet" id="438134">
    <property type="disease" value="PCNA-related progressive neurodegenerative photosensitivity syndrome"/>
</dbReference>
<dbReference type="PharmGKB" id="PA263"/>
<dbReference type="VEuPathDB" id="HostDB:ENSG00000132646"/>
<dbReference type="eggNOG" id="KOG1636">
    <property type="taxonomic scope" value="Eukaryota"/>
</dbReference>
<dbReference type="GeneTree" id="ENSGT00390000004965"/>
<dbReference type="HOGENOM" id="CLU_043978_3_0_1"/>
<dbReference type="InParanoid" id="P12004"/>
<dbReference type="OMA" id="EMKLINM"/>
<dbReference type="OrthoDB" id="534348at2759"/>
<dbReference type="PAN-GO" id="P12004">
    <property type="GO annotations" value="5 GO annotations based on evolutionary models"/>
</dbReference>
<dbReference type="PhylomeDB" id="P12004"/>
<dbReference type="TreeFam" id="TF313441"/>
<dbReference type="PathwayCommons" id="P12004"/>
<dbReference type="Reactome" id="R-HSA-110312">
    <property type="pathway name" value="Translesion synthesis by REV1"/>
</dbReference>
<dbReference type="Reactome" id="R-HSA-110314">
    <property type="pathway name" value="Recognition of DNA damage by PCNA-containing replication complex"/>
</dbReference>
<dbReference type="Reactome" id="R-HSA-110320">
    <property type="pathway name" value="Translesion Synthesis by POLH"/>
</dbReference>
<dbReference type="Reactome" id="R-HSA-1362277">
    <property type="pathway name" value="Transcription of E2F targets under negative control by DREAM complex"/>
</dbReference>
<dbReference type="Reactome" id="R-HSA-174411">
    <property type="pathway name" value="Polymerase switching on the C-strand of the telomere"/>
</dbReference>
<dbReference type="Reactome" id="R-HSA-174414">
    <property type="pathway name" value="Processive synthesis on the C-strand of the telomere"/>
</dbReference>
<dbReference type="Reactome" id="R-HSA-174417">
    <property type="pathway name" value="Telomere C-strand (Lagging Strand) Synthesis"/>
</dbReference>
<dbReference type="Reactome" id="R-HSA-174437">
    <property type="pathway name" value="Removal of the Flap Intermediate from the C-strand"/>
</dbReference>
<dbReference type="Reactome" id="R-HSA-4615885">
    <property type="pathway name" value="SUMOylation of DNA replication proteins"/>
</dbReference>
<dbReference type="Reactome" id="R-HSA-5358565">
    <property type="pathway name" value="Mismatch repair (MMR) directed by MSH2:MSH6 (MutSalpha)"/>
</dbReference>
<dbReference type="Reactome" id="R-HSA-5358606">
    <property type="pathway name" value="Mismatch repair (MMR) directed by MSH2:MSH3 (MutSbeta)"/>
</dbReference>
<dbReference type="Reactome" id="R-HSA-5651801">
    <property type="pathway name" value="PCNA-Dependent Long Patch Base Excision Repair"/>
</dbReference>
<dbReference type="Reactome" id="R-HSA-5655862">
    <property type="pathway name" value="Translesion synthesis by POLK"/>
</dbReference>
<dbReference type="Reactome" id="R-HSA-5656121">
    <property type="pathway name" value="Translesion synthesis by POLI"/>
</dbReference>
<dbReference type="Reactome" id="R-HSA-5656169">
    <property type="pathway name" value="Termination of translesion DNA synthesis"/>
</dbReference>
<dbReference type="Reactome" id="R-HSA-5685942">
    <property type="pathway name" value="HDR through Homologous Recombination (HRR)"/>
</dbReference>
<dbReference type="Reactome" id="R-HSA-5696397">
    <property type="pathway name" value="Gap-filling DNA repair synthesis and ligation in GG-NER"/>
</dbReference>
<dbReference type="Reactome" id="R-HSA-5696400">
    <property type="pathway name" value="Dual Incision in GG-NER"/>
</dbReference>
<dbReference type="Reactome" id="R-HSA-6782135">
    <property type="pathway name" value="Dual incision in TC-NER"/>
</dbReference>
<dbReference type="Reactome" id="R-HSA-6782210">
    <property type="pathway name" value="Gap-filling DNA repair synthesis and ligation in TC-NER"/>
</dbReference>
<dbReference type="Reactome" id="R-HSA-6804114">
    <property type="pathway name" value="TP53 Regulates Transcription of Genes Involved in G2 Cell Cycle Arrest"/>
</dbReference>
<dbReference type="Reactome" id="R-HSA-69091">
    <property type="pathway name" value="Polymerase switching"/>
</dbReference>
<dbReference type="Reactome" id="R-HSA-69166">
    <property type="pathway name" value="Removal of the Flap Intermediate"/>
</dbReference>
<dbReference type="Reactome" id="R-HSA-69183">
    <property type="pathway name" value="Processive synthesis on the lagging strand"/>
</dbReference>
<dbReference type="Reactome" id="R-HSA-69205">
    <property type="pathway name" value="G1/S-Specific Transcription"/>
</dbReference>
<dbReference type="Reactome" id="R-HSA-8866654">
    <property type="pathway name" value="E3 ubiquitin ligases ubiquitinate target proteins"/>
</dbReference>
<dbReference type="SignaLink" id="P12004"/>
<dbReference type="SIGNOR" id="P12004"/>
<dbReference type="BioGRID-ORCS" id="5111">
    <property type="hits" value="865 hits in 1151 CRISPR screens"/>
</dbReference>
<dbReference type="CD-CODE" id="91857CE7">
    <property type="entry name" value="Nucleolus"/>
</dbReference>
<dbReference type="CD-CODE" id="DEE660B4">
    <property type="entry name" value="Stress granule"/>
</dbReference>
<dbReference type="ChiTaRS" id="PCNA">
    <property type="organism name" value="human"/>
</dbReference>
<dbReference type="EvolutionaryTrace" id="P12004"/>
<dbReference type="GeneWiki" id="Proliferating_cell_nuclear_antigen"/>
<dbReference type="GenomeRNAi" id="5111"/>
<dbReference type="Pharos" id="P12004">
    <property type="development level" value="Tchem"/>
</dbReference>
<dbReference type="PRO" id="PR:P12004"/>
<dbReference type="Proteomes" id="UP000005640">
    <property type="component" value="Chromosome 20"/>
</dbReference>
<dbReference type="RNAct" id="P12004">
    <property type="molecule type" value="protein"/>
</dbReference>
<dbReference type="Bgee" id="ENSG00000132646">
    <property type="expression patterns" value="Expressed in oocyte and 198 other cell types or tissues"/>
</dbReference>
<dbReference type="GO" id="GO:0005813">
    <property type="term" value="C:centrosome"/>
    <property type="evidence" value="ECO:0000314"/>
    <property type="project" value="MGI"/>
</dbReference>
<dbReference type="GO" id="GO:0000785">
    <property type="term" value="C:chromatin"/>
    <property type="evidence" value="ECO:0000314"/>
    <property type="project" value="UniProtKB"/>
</dbReference>
<dbReference type="GO" id="GO:0000781">
    <property type="term" value="C:chromosome, telomeric region"/>
    <property type="evidence" value="ECO:0007005"/>
    <property type="project" value="BHF-UCL"/>
</dbReference>
<dbReference type="GO" id="GO:0000307">
    <property type="term" value="C:cyclin-dependent protein kinase holoenzyme complex"/>
    <property type="evidence" value="ECO:0007669"/>
    <property type="project" value="Ensembl"/>
</dbReference>
<dbReference type="GO" id="GO:0070062">
    <property type="term" value="C:extracellular exosome"/>
    <property type="evidence" value="ECO:0007005"/>
    <property type="project" value="UniProtKB"/>
</dbReference>
<dbReference type="GO" id="GO:0001673">
    <property type="term" value="C:male germ cell nucleus"/>
    <property type="evidence" value="ECO:0007669"/>
    <property type="project" value="Ensembl"/>
</dbReference>
<dbReference type="GO" id="GO:0016604">
    <property type="term" value="C:nuclear body"/>
    <property type="evidence" value="ECO:0000314"/>
    <property type="project" value="HPA"/>
</dbReference>
<dbReference type="GO" id="GO:0005652">
    <property type="term" value="C:nuclear lamina"/>
    <property type="evidence" value="ECO:0007669"/>
    <property type="project" value="Ensembl"/>
</dbReference>
<dbReference type="GO" id="GO:0043596">
    <property type="term" value="C:nuclear replication fork"/>
    <property type="evidence" value="ECO:0000314"/>
    <property type="project" value="UniProtKB"/>
</dbReference>
<dbReference type="GO" id="GO:0005654">
    <property type="term" value="C:nucleoplasm"/>
    <property type="evidence" value="ECO:0000314"/>
    <property type="project" value="HPA"/>
</dbReference>
<dbReference type="GO" id="GO:0005634">
    <property type="term" value="C:nucleus"/>
    <property type="evidence" value="ECO:0000314"/>
    <property type="project" value="UniProtKB"/>
</dbReference>
<dbReference type="GO" id="GO:0043626">
    <property type="term" value="C:PCNA complex"/>
    <property type="evidence" value="ECO:0000314"/>
    <property type="project" value="UniProtKB"/>
</dbReference>
<dbReference type="GO" id="GO:0070557">
    <property type="term" value="C:PCNA-p21 complex"/>
    <property type="evidence" value="ECO:0000314"/>
    <property type="project" value="UniProtKB"/>
</dbReference>
<dbReference type="GO" id="GO:0005657">
    <property type="term" value="C:replication fork"/>
    <property type="evidence" value="ECO:0000314"/>
    <property type="project" value="MGI"/>
</dbReference>
<dbReference type="GO" id="GO:0030894">
    <property type="term" value="C:replisome"/>
    <property type="evidence" value="ECO:0000304"/>
    <property type="project" value="BHF-UCL"/>
</dbReference>
<dbReference type="GO" id="GO:0003682">
    <property type="term" value="F:chromatin binding"/>
    <property type="evidence" value="ECO:0000314"/>
    <property type="project" value="UniProtKB"/>
</dbReference>
<dbReference type="GO" id="GO:0003684">
    <property type="term" value="F:damaged DNA binding"/>
    <property type="evidence" value="ECO:0000314"/>
    <property type="project" value="UniProtKB"/>
</dbReference>
<dbReference type="GO" id="GO:0032139">
    <property type="term" value="F:dinucleotide insertion or deletion binding"/>
    <property type="evidence" value="ECO:0000314"/>
    <property type="project" value="BHF-UCL"/>
</dbReference>
<dbReference type="GO" id="GO:0070182">
    <property type="term" value="F:DNA polymerase binding"/>
    <property type="evidence" value="ECO:0000353"/>
    <property type="project" value="UniProtKB"/>
</dbReference>
<dbReference type="GO" id="GO:0030337">
    <property type="term" value="F:DNA polymerase processivity factor activity"/>
    <property type="evidence" value="ECO:0000318"/>
    <property type="project" value="GO_Central"/>
</dbReference>
<dbReference type="GO" id="GO:0019899">
    <property type="term" value="F:enzyme binding"/>
    <property type="evidence" value="ECO:0000353"/>
    <property type="project" value="BHF-UCL"/>
</dbReference>
<dbReference type="GO" id="GO:0035035">
    <property type="term" value="F:histone acetyltransferase binding"/>
    <property type="evidence" value="ECO:0000353"/>
    <property type="project" value="UniProtKB"/>
</dbReference>
<dbReference type="GO" id="GO:0042802">
    <property type="term" value="F:identical protein binding"/>
    <property type="evidence" value="ECO:0000353"/>
    <property type="project" value="IntAct"/>
</dbReference>
<dbReference type="GO" id="GO:0032405">
    <property type="term" value="F:MutLalpha complex binding"/>
    <property type="evidence" value="ECO:0000314"/>
    <property type="project" value="HGNC-UCL"/>
</dbReference>
<dbReference type="GO" id="GO:0030331">
    <property type="term" value="F:nuclear estrogen receptor binding"/>
    <property type="evidence" value="ECO:0007669"/>
    <property type="project" value="Ensembl"/>
</dbReference>
<dbReference type="GO" id="GO:0044877">
    <property type="term" value="F:protein-containing complex binding"/>
    <property type="evidence" value="ECO:0000314"/>
    <property type="project" value="UniProtKB"/>
</dbReference>
<dbReference type="GO" id="GO:0000701">
    <property type="term" value="F:purine-specific mismatch base pair DNA N-glycosylase activity"/>
    <property type="evidence" value="ECO:0000314"/>
    <property type="project" value="BHF-UCL"/>
</dbReference>
<dbReference type="GO" id="GO:0030971">
    <property type="term" value="F:receptor tyrosine kinase binding"/>
    <property type="evidence" value="ECO:0000353"/>
    <property type="project" value="UniProtKB"/>
</dbReference>
<dbReference type="GO" id="GO:0006287">
    <property type="term" value="P:base-excision repair, gap-filling"/>
    <property type="evidence" value="ECO:0007669"/>
    <property type="project" value="Ensembl"/>
</dbReference>
<dbReference type="GO" id="GO:0070301">
    <property type="term" value="P:cellular response to hydrogen peroxide"/>
    <property type="evidence" value="ECO:0007669"/>
    <property type="project" value="Ensembl"/>
</dbReference>
<dbReference type="GO" id="GO:0034644">
    <property type="term" value="P:cellular response to UV"/>
    <property type="evidence" value="ECO:0000314"/>
    <property type="project" value="UniProtKB"/>
</dbReference>
<dbReference type="GO" id="GO:0071466">
    <property type="term" value="P:cellular response to xenobiotic stimulus"/>
    <property type="evidence" value="ECO:0007669"/>
    <property type="project" value="Ensembl"/>
</dbReference>
<dbReference type="GO" id="GO:0006325">
    <property type="term" value="P:chromatin organization"/>
    <property type="evidence" value="ECO:0000314"/>
    <property type="project" value="UniProtKB"/>
</dbReference>
<dbReference type="GO" id="GO:0030855">
    <property type="term" value="P:epithelial cell differentiation"/>
    <property type="evidence" value="ECO:0000270"/>
    <property type="project" value="UniProtKB"/>
</dbReference>
<dbReference type="GO" id="GO:0044849">
    <property type="term" value="P:estrous cycle"/>
    <property type="evidence" value="ECO:0007669"/>
    <property type="project" value="Ensembl"/>
</dbReference>
<dbReference type="GO" id="GO:0007507">
    <property type="term" value="P:heart development"/>
    <property type="evidence" value="ECO:0007669"/>
    <property type="project" value="Ensembl"/>
</dbReference>
<dbReference type="GO" id="GO:0006272">
    <property type="term" value="P:leading strand elongation"/>
    <property type="evidence" value="ECO:0000318"/>
    <property type="project" value="GO_Central"/>
</dbReference>
<dbReference type="GO" id="GO:0097421">
    <property type="term" value="P:liver regeneration"/>
    <property type="evidence" value="ECO:0007669"/>
    <property type="project" value="Ensembl"/>
</dbReference>
<dbReference type="GO" id="GO:0006298">
    <property type="term" value="P:mismatch repair"/>
    <property type="evidence" value="ECO:0000314"/>
    <property type="project" value="BHF-UCL"/>
</dbReference>
<dbReference type="GO" id="GO:1902990">
    <property type="term" value="P:mitotic telomere maintenance via semi-conservative replication"/>
    <property type="evidence" value="ECO:0000250"/>
    <property type="project" value="BHF-UCL"/>
</dbReference>
<dbReference type="GO" id="GO:0000122">
    <property type="term" value="P:negative regulation of transcription by RNA polymerase II"/>
    <property type="evidence" value="ECO:0007669"/>
    <property type="project" value="Ensembl"/>
</dbReference>
<dbReference type="GO" id="GO:0032077">
    <property type="term" value="P:positive regulation of deoxyribonuclease activity"/>
    <property type="evidence" value="ECO:0000314"/>
    <property type="project" value="UniProtKB"/>
</dbReference>
<dbReference type="GO" id="GO:0045739">
    <property type="term" value="P:positive regulation of DNA repair"/>
    <property type="evidence" value="ECO:0000315"/>
    <property type="project" value="UniProtKB"/>
</dbReference>
<dbReference type="GO" id="GO:0045740">
    <property type="term" value="P:positive regulation of DNA replication"/>
    <property type="evidence" value="ECO:0000315"/>
    <property type="project" value="UniProtKB"/>
</dbReference>
<dbReference type="GO" id="GO:1900264">
    <property type="term" value="P:positive regulation of DNA-directed DNA polymerase activity"/>
    <property type="evidence" value="ECO:0000315"/>
    <property type="project" value="UniProtKB"/>
</dbReference>
<dbReference type="GO" id="GO:0031297">
    <property type="term" value="P:replication fork processing"/>
    <property type="evidence" value="ECO:0000250"/>
    <property type="project" value="BHF-UCL"/>
</dbReference>
<dbReference type="GO" id="GO:0046686">
    <property type="term" value="P:response to cadmium ion"/>
    <property type="evidence" value="ECO:0007669"/>
    <property type="project" value="Ensembl"/>
</dbReference>
<dbReference type="GO" id="GO:0071548">
    <property type="term" value="P:response to dexamethasone"/>
    <property type="evidence" value="ECO:0007669"/>
    <property type="project" value="Ensembl"/>
</dbReference>
<dbReference type="GO" id="GO:0032355">
    <property type="term" value="P:response to estradiol"/>
    <property type="evidence" value="ECO:0007669"/>
    <property type="project" value="Ensembl"/>
</dbReference>
<dbReference type="GO" id="GO:1902065">
    <property type="term" value="P:response to L-glutamate"/>
    <property type="evidence" value="ECO:0007669"/>
    <property type="project" value="Ensembl"/>
</dbReference>
<dbReference type="GO" id="GO:0019985">
    <property type="term" value="P:translesion synthesis"/>
    <property type="evidence" value="ECO:0000314"/>
    <property type="project" value="UniProtKB"/>
</dbReference>
<dbReference type="CDD" id="cd00577">
    <property type="entry name" value="PCNA"/>
    <property type="match status" value="1"/>
</dbReference>
<dbReference type="FunFam" id="3.10.150.10:FF:000006">
    <property type="entry name" value="Proliferating cell nuclear antigen"/>
    <property type="match status" value="1"/>
</dbReference>
<dbReference type="FunFam" id="3.10.150.10:FF:000008">
    <property type="entry name" value="Proliferating cell nuclear antigen"/>
    <property type="match status" value="1"/>
</dbReference>
<dbReference type="FunFam" id="3.70.10.10:FF:000001">
    <property type="entry name" value="Proliferating cell nuclear antigen"/>
    <property type="match status" value="1"/>
</dbReference>
<dbReference type="Gene3D" id="3.70.10.10">
    <property type="match status" value="1"/>
</dbReference>
<dbReference type="HAMAP" id="MF_00317">
    <property type="entry name" value="DNApol_clamp_arch"/>
    <property type="match status" value="1"/>
</dbReference>
<dbReference type="IDEAL" id="IID00022"/>
<dbReference type="InterPro" id="IPR046938">
    <property type="entry name" value="DNA_clamp_sf"/>
</dbReference>
<dbReference type="InterPro" id="IPR000730">
    <property type="entry name" value="Pr_cel_nuc_antig"/>
</dbReference>
<dbReference type="InterPro" id="IPR022649">
    <property type="entry name" value="Pr_cel_nuc_antig_C"/>
</dbReference>
<dbReference type="InterPro" id="IPR022659">
    <property type="entry name" value="Pr_cel_nuc_antig_CS"/>
</dbReference>
<dbReference type="InterPro" id="IPR022648">
    <property type="entry name" value="Pr_cel_nuc_antig_N"/>
</dbReference>
<dbReference type="NCBIfam" id="TIGR00590">
    <property type="entry name" value="pcna"/>
    <property type="match status" value="1"/>
</dbReference>
<dbReference type="PANTHER" id="PTHR11352">
    <property type="entry name" value="PROLIFERATING CELL NUCLEAR ANTIGEN"/>
    <property type="match status" value="1"/>
</dbReference>
<dbReference type="PANTHER" id="PTHR11352:SF0">
    <property type="entry name" value="PROLIFERATING CELL NUCLEAR ANTIGEN"/>
    <property type="match status" value="1"/>
</dbReference>
<dbReference type="Pfam" id="PF02747">
    <property type="entry name" value="PCNA_C"/>
    <property type="match status" value="1"/>
</dbReference>
<dbReference type="Pfam" id="PF00705">
    <property type="entry name" value="PCNA_N"/>
    <property type="match status" value="1"/>
</dbReference>
<dbReference type="PRINTS" id="PR00339">
    <property type="entry name" value="PCNACYCLIN"/>
</dbReference>
<dbReference type="SUPFAM" id="SSF55979">
    <property type="entry name" value="DNA clamp"/>
    <property type="match status" value="2"/>
</dbReference>
<dbReference type="PROSITE" id="PS01251">
    <property type="entry name" value="PCNA_1"/>
    <property type="match status" value="1"/>
</dbReference>
<dbReference type="PROSITE" id="PS00293">
    <property type="entry name" value="PCNA_2"/>
    <property type="match status" value="1"/>
</dbReference>
<keyword id="KW-0002">3D-structure</keyword>
<keyword id="KW-0007">Acetylation</keyword>
<keyword id="KW-0209">Deafness</keyword>
<keyword id="KW-0903">Direct protein sequencing</keyword>
<keyword id="KW-0225">Disease variant</keyword>
<keyword id="KW-1015">Disulfide bond</keyword>
<keyword id="KW-0227">DNA damage</keyword>
<keyword id="KW-0234">DNA repair</keyword>
<keyword id="KW-0235">DNA replication</keyword>
<keyword id="KW-0238">DNA-binding</keyword>
<keyword id="KW-0242">Dwarfism</keyword>
<keyword id="KW-0945">Host-virus interaction</keyword>
<keyword id="KW-1017">Isopeptide bond</keyword>
<keyword id="KW-0488">Methylation</keyword>
<keyword id="KW-0523">Neurodegeneration</keyword>
<keyword id="KW-0539">Nucleus</keyword>
<keyword id="KW-0597">Phosphoprotein</keyword>
<keyword id="KW-1267">Proteomics identification</keyword>
<keyword id="KW-1185">Reference proteome</keyword>
<keyword id="KW-0832">Ubl conjugation</keyword>
<organism>
    <name type="scientific">Homo sapiens</name>
    <name type="common">Human</name>
    <dbReference type="NCBI Taxonomy" id="9606"/>
    <lineage>
        <taxon>Eukaryota</taxon>
        <taxon>Metazoa</taxon>
        <taxon>Chordata</taxon>
        <taxon>Craniata</taxon>
        <taxon>Vertebrata</taxon>
        <taxon>Euteleostomi</taxon>
        <taxon>Mammalia</taxon>
        <taxon>Eutheria</taxon>
        <taxon>Euarchontoglires</taxon>
        <taxon>Primates</taxon>
        <taxon>Haplorrhini</taxon>
        <taxon>Catarrhini</taxon>
        <taxon>Hominidae</taxon>
        <taxon>Homo</taxon>
    </lineage>
</organism>
<gene>
    <name type="primary">PCNA</name>
</gene>
<sequence>MFEARLVQGSILKKVLEALKDLINEACWDISSSGVNLQSMDSSHVSLVQLTLRSEGFDTYRCDRNLAMGVNLTSMSKILKCAGNEDIITLRAEDNADTLALVFEAPNQEKVSDYEMKLMDLDVEQLGIPEQEYSCVVKMPSGEFARICRDLSHIGDAVVISCAKDGVKFSASGELGNGNIKLSQTSNVDKEEEAVTIEMNEPVQLTFALRYLNFFTKATPLSSTVTLSMSADVPLVVEYKIADMGHLKYYLAPKIEDEEGS</sequence>
<proteinExistence type="evidence at protein level"/>